<gene>
    <name type="primary">ADAR</name>
    <name type="synonym">ADAR1</name>
    <name type="synonym">DSRAD</name>
    <name type="synonym">G1P1</name>
    <name type="synonym">IFI4</name>
</gene>
<keyword id="KW-0002">3D-structure</keyword>
<keyword id="KW-0948">Aicardi-Goutieres syndrome</keyword>
<keyword id="KW-0877">Alternative promoter usage</keyword>
<keyword id="KW-0025">Alternative splicing</keyword>
<keyword id="KW-0051">Antiviral defense</keyword>
<keyword id="KW-0963">Cytoplasm</keyword>
<keyword id="KW-0903">Direct protein sequencing</keyword>
<keyword id="KW-0225">Disease variant</keyword>
<keyword id="KW-0238">DNA-binding</keyword>
<keyword id="KW-0378">Hydrolase</keyword>
<keyword id="KW-0391">Immunity</keyword>
<keyword id="KW-0399">Innate immunity</keyword>
<keyword id="KW-1017">Isopeptide bond</keyword>
<keyword id="KW-0479">Metal-binding</keyword>
<keyword id="KW-0488">Methylation</keyword>
<keyword id="KW-0507">mRNA processing</keyword>
<keyword id="KW-0539">Nucleus</keyword>
<keyword id="KW-0597">Phosphoprotein</keyword>
<keyword id="KW-1267">Proteomics identification</keyword>
<keyword id="KW-1185">Reference proteome</keyword>
<keyword id="KW-0677">Repeat</keyword>
<keyword id="KW-0694">RNA-binding</keyword>
<keyword id="KW-0943">RNA-mediated gene silencing</keyword>
<keyword id="KW-0832">Ubl conjugation</keyword>
<keyword id="KW-0862">Zinc</keyword>
<accession>P55265</accession>
<accession>B1AQQ9</accession>
<accession>B1AQR0</accession>
<accession>D3DV76</accession>
<accession>O15223</accession>
<accession>O43859</accession>
<accession>O43860</accession>
<accession>Q9BYM3</accession>
<accession>Q9BYM4</accession>
<proteinExistence type="evidence at protein level"/>
<organism>
    <name type="scientific">Homo sapiens</name>
    <name type="common">Human</name>
    <dbReference type="NCBI Taxonomy" id="9606"/>
    <lineage>
        <taxon>Eukaryota</taxon>
        <taxon>Metazoa</taxon>
        <taxon>Chordata</taxon>
        <taxon>Craniata</taxon>
        <taxon>Vertebrata</taxon>
        <taxon>Euteleostomi</taxon>
        <taxon>Mammalia</taxon>
        <taxon>Eutheria</taxon>
        <taxon>Euarchontoglires</taxon>
        <taxon>Primates</taxon>
        <taxon>Haplorrhini</taxon>
        <taxon>Catarrhini</taxon>
        <taxon>Hominidae</taxon>
        <taxon>Homo</taxon>
    </lineage>
</organism>
<protein>
    <recommendedName>
        <fullName>Double-stranded RNA-specific adenosine deaminase</fullName>
        <shortName evidence="40">DRADA</shortName>
        <ecNumber evidence="35 36">3.5.4.37</ecNumber>
    </recommendedName>
    <alternativeName>
        <fullName>136 kDa double-stranded RNA-binding protein</fullName>
        <shortName>p136</shortName>
    </alternativeName>
    <alternativeName>
        <fullName>Interferon-inducible protein 4</fullName>
        <shortName>IFI-4</shortName>
    </alternativeName>
    <alternativeName>
        <fullName>K88DSRBP</fullName>
    </alternativeName>
</protein>
<sequence length="1226" mass="136066">MNPRQGYSLSGYYTHPFQGYEHRQLRYQQPGPGSSPSSFLLKQIEFLKGQLPEAPVIGKQTPSLPPSLPGLRPRFPVLLASSTRGRQVDIRGVPRGVHLRSQGLQRGFQHPSPRGRSLPQRGVDCLSSHFQELSIYQDQEQRILKFLEELGEGKATTAHDLSGKLGTPKKEINRVLYSLAKKGKLQKEAGTPPLWKIAVSTQAWNQHSGVVRPDGHSQGAPNSDPSLEPEDRNSTSVSEDLLEPFIAVSAQAWNQHSGVVRPDSHSQGSPNSDPGLEPEDSNSTSALEDPLEFLDMAEIKEKICDYLFNVSDSSALNLAKNIGLTKARDINAVLIDMERQGDVYRQGTTPPIWHLTDKKRERMQIKRNTNSVPETAPAAIPETKRNAEFLTCNIPTSNASNNMVTTEKVENGQEPVIKLENRQEARPEPARLKPPVHYNGPSKAGYVDFENGQWATDDIPDDLNSIRAAPGEFRAIMEMPSFYSHGLPRCSPYKKLTECQLKNPISGLLEYAQFASQTCEFNMIEQSGPPHEPRFKFQVVINGREFPPAEAGSKKVAKQDAAMKAMTILLEEAKAKDSGKSEESSHYSTEKESEKTAESQTPTPSATSFFSGKSPVTTLLECMHKLGNSCEFRLLSKEGPAHEPKFQYCVAVGAQTFPSVSAPSKKVAKQMAAEEAMKALHGEATNSMASDNQPEGMISESLDNLESMMPNKVRKIGELVRYLNTNPVGGLLEYARSHGFAAEFKLVDQSGPPHEPKFVYQAKVGGRWFPAVCAHSKKQGKQEAADAALRVLIGENEKAERMGFTEVTPVTGASLRRTMLLLSRSPEAQPKTLPLTGSTFHDQIAMLSHRCFNTLTNSFQPSLLGRKILAAIIMKKDSEDMGVVVSLGTGNRCVKGDSLSLKGETVNDCHAEIISRRGFIRFLYSELMKYNSQTAKDSIFEPAKGGEKLQIKKTVSFHLYISTAPCGDGALFDKSCSDRAMESTESRHYPVFENPKQGKLRTKVENGEGTIPVESSDIVPTWDGIRLGERLRTMSCSDKILRWNVLGLQGALLTHFLQPIYLKSVTLGYLFSQGHLTRAICCRVTRDGSAFEDGLRHPFIVNHPKVGRVSIYDSKRQSGKTKETSVNWCLADGYDLEILDGTRGTVDGPRNELSRVSKKNIFLLFKKLCSFRYRRDLLRLSYGEAKKAARDYETAKNYFKKGLKDMGYGNWISKPQEEKNFYLCPV</sequence>
<name>DSRAD_HUMAN</name>
<dbReference type="EC" id="3.5.4.37" evidence="35 36"/>
<dbReference type="EMBL" id="U10439">
    <property type="protein sequence ID" value="AAB06697.1"/>
    <property type="molecule type" value="mRNA"/>
</dbReference>
<dbReference type="EMBL" id="U75503">
    <property type="protein sequence ID" value="AAB97116.1"/>
    <property type="molecule type" value="Genomic_DNA"/>
</dbReference>
<dbReference type="EMBL" id="U75489">
    <property type="protein sequence ID" value="AAB97116.1"/>
    <property type="status" value="JOINED"/>
    <property type="molecule type" value="Genomic_DNA"/>
</dbReference>
<dbReference type="EMBL" id="U75490">
    <property type="protein sequence ID" value="AAB97116.1"/>
    <property type="status" value="JOINED"/>
    <property type="molecule type" value="Genomic_DNA"/>
</dbReference>
<dbReference type="EMBL" id="U75491">
    <property type="protein sequence ID" value="AAB97116.1"/>
    <property type="status" value="JOINED"/>
    <property type="molecule type" value="Genomic_DNA"/>
</dbReference>
<dbReference type="EMBL" id="U75492">
    <property type="protein sequence ID" value="AAB97116.1"/>
    <property type="status" value="JOINED"/>
    <property type="molecule type" value="Genomic_DNA"/>
</dbReference>
<dbReference type="EMBL" id="U75493">
    <property type="protein sequence ID" value="AAB97116.1"/>
    <property type="status" value="JOINED"/>
    <property type="molecule type" value="Genomic_DNA"/>
</dbReference>
<dbReference type="EMBL" id="U75494">
    <property type="protein sequence ID" value="AAB97116.1"/>
    <property type="status" value="JOINED"/>
    <property type="molecule type" value="Genomic_DNA"/>
</dbReference>
<dbReference type="EMBL" id="U75495">
    <property type="protein sequence ID" value="AAB97116.1"/>
    <property type="status" value="JOINED"/>
    <property type="molecule type" value="Genomic_DNA"/>
</dbReference>
<dbReference type="EMBL" id="U75496">
    <property type="protein sequence ID" value="AAB97116.1"/>
    <property type="status" value="JOINED"/>
    <property type="molecule type" value="Genomic_DNA"/>
</dbReference>
<dbReference type="EMBL" id="U75497">
    <property type="protein sequence ID" value="AAB97116.1"/>
    <property type="status" value="JOINED"/>
    <property type="molecule type" value="Genomic_DNA"/>
</dbReference>
<dbReference type="EMBL" id="U75498">
    <property type="protein sequence ID" value="AAB97116.1"/>
    <property type="status" value="JOINED"/>
    <property type="molecule type" value="Genomic_DNA"/>
</dbReference>
<dbReference type="EMBL" id="U75499">
    <property type="protein sequence ID" value="AAB97116.1"/>
    <property type="status" value="JOINED"/>
    <property type="molecule type" value="Genomic_DNA"/>
</dbReference>
<dbReference type="EMBL" id="U75500">
    <property type="protein sequence ID" value="AAB97116.1"/>
    <property type="status" value="JOINED"/>
    <property type="molecule type" value="Genomic_DNA"/>
</dbReference>
<dbReference type="EMBL" id="U75501">
    <property type="protein sequence ID" value="AAB97116.1"/>
    <property type="status" value="JOINED"/>
    <property type="molecule type" value="Genomic_DNA"/>
</dbReference>
<dbReference type="EMBL" id="U75502">
    <property type="protein sequence ID" value="AAB97116.1"/>
    <property type="status" value="JOINED"/>
    <property type="molecule type" value="Genomic_DNA"/>
</dbReference>
<dbReference type="EMBL" id="U75503">
    <property type="protein sequence ID" value="AAB97117.1"/>
    <property type="molecule type" value="Genomic_DNA"/>
</dbReference>
<dbReference type="EMBL" id="U75489">
    <property type="protein sequence ID" value="AAB97117.1"/>
    <property type="status" value="JOINED"/>
    <property type="molecule type" value="Genomic_DNA"/>
</dbReference>
<dbReference type="EMBL" id="U75490">
    <property type="protein sequence ID" value="AAB97117.1"/>
    <property type="status" value="JOINED"/>
    <property type="molecule type" value="Genomic_DNA"/>
</dbReference>
<dbReference type="EMBL" id="U75491">
    <property type="protein sequence ID" value="AAB97117.1"/>
    <property type="status" value="JOINED"/>
    <property type="molecule type" value="Genomic_DNA"/>
</dbReference>
<dbReference type="EMBL" id="U75492">
    <property type="protein sequence ID" value="AAB97117.1"/>
    <property type="status" value="JOINED"/>
    <property type="molecule type" value="Genomic_DNA"/>
</dbReference>
<dbReference type="EMBL" id="U75493">
    <property type="protein sequence ID" value="AAB97117.1"/>
    <property type="status" value="JOINED"/>
    <property type="molecule type" value="Genomic_DNA"/>
</dbReference>
<dbReference type="EMBL" id="U75494">
    <property type="protein sequence ID" value="AAB97117.1"/>
    <property type="status" value="JOINED"/>
    <property type="molecule type" value="Genomic_DNA"/>
</dbReference>
<dbReference type="EMBL" id="U75495">
    <property type="protein sequence ID" value="AAB97117.1"/>
    <property type="status" value="JOINED"/>
    <property type="molecule type" value="Genomic_DNA"/>
</dbReference>
<dbReference type="EMBL" id="U75496">
    <property type="protein sequence ID" value="AAB97117.1"/>
    <property type="status" value="JOINED"/>
    <property type="molecule type" value="Genomic_DNA"/>
</dbReference>
<dbReference type="EMBL" id="U75497">
    <property type="protein sequence ID" value="AAB97117.1"/>
    <property type="status" value="JOINED"/>
    <property type="molecule type" value="Genomic_DNA"/>
</dbReference>
<dbReference type="EMBL" id="U75498">
    <property type="protein sequence ID" value="AAB97117.1"/>
    <property type="status" value="JOINED"/>
    <property type="molecule type" value="Genomic_DNA"/>
</dbReference>
<dbReference type="EMBL" id="U75499">
    <property type="protein sequence ID" value="AAB97117.1"/>
    <property type="status" value="JOINED"/>
    <property type="molecule type" value="Genomic_DNA"/>
</dbReference>
<dbReference type="EMBL" id="U75500">
    <property type="protein sequence ID" value="AAB97117.1"/>
    <property type="status" value="JOINED"/>
    <property type="molecule type" value="Genomic_DNA"/>
</dbReference>
<dbReference type="EMBL" id="U75501">
    <property type="protein sequence ID" value="AAB97117.1"/>
    <property type="status" value="JOINED"/>
    <property type="molecule type" value="Genomic_DNA"/>
</dbReference>
<dbReference type="EMBL" id="U75502">
    <property type="protein sequence ID" value="AAB97117.1"/>
    <property type="status" value="JOINED"/>
    <property type="molecule type" value="Genomic_DNA"/>
</dbReference>
<dbReference type="EMBL" id="U75503">
    <property type="protein sequence ID" value="AAB97118.1"/>
    <property type="molecule type" value="Genomic_DNA"/>
</dbReference>
<dbReference type="EMBL" id="U75489">
    <property type="protein sequence ID" value="AAB97118.1"/>
    <property type="status" value="JOINED"/>
    <property type="molecule type" value="Genomic_DNA"/>
</dbReference>
<dbReference type="EMBL" id="U75490">
    <property type="protein sequence ID" value="AAB97118.1"/>
    <property type="status" value="JOINED"/>
    <property type="molecule type" value="Genomic_DNA"/>
</dbReference>
<dbReference type="EMBL" id="U75491">
    <property type="protein sequence ID" value="AAB97118.1"/>
    <property type="status" value="JOINED"/>
    <property type="molecule type" value="Genomic_DNA"/>
</dbReference>
<dbReference type="EMBL" id="U75492">
    <property type="protein sequence ID" value="AAB97118.1"/>
    <property type="status" value="JOINED"/>
    <property type="molecule type" value="Genomic_DNA"/>
</dbReference>
<dbReference type="EMBL" id="U75493">
    <property type="protein sequence ID" value="AAB97118.1"/>
    <property type="status" value="JOINED"/>
    <property type="molecule type" value="Genomic_DNA"/>
</dbReference>
<dbReference type="EMBL" id="U75494">
    <property type="protein sequence ID" value="AAB97118.1"/>
    <property type="status" value="JOINED"/>
    <property type="molecule type" value="Genomic_DNA"/>
</dbReference>
<dbReference type="EMBL" id="U75495">
    <property type="protein sequence ID" value="AAB97118.1"/>
    <property type="status" value="JOINED"/>
    <property type="molecule type" value="Genomic_DNA"/>
</dbReference>
<dbReference type="EMBL" id="U75496">
    <property type="protein sequence ID" value="AAB97118.1"/>
    <property type="status" value="JOINED"/>
    <property type="molecule type" value="Genomic_DNA"/>
</dbReference>
<dbReference type="EMBL" id="U75497">
    <property type="protein sequence ID" value="AAB97118.1"/>
    <property type="status" value="JOINED"/>
    <property type="molecule type" value="Genomic_DNA"/>
</dbReference>
<dbReference type="EMBL" id="U75498">
    <property type="protein sequence ID" value="AAB97118.1"/>
    <property type="status" value="JOINED"/>
    <property type="molecule type" value="Genomic_DNA"/>
</dbReference>
<dbReference type="EMBL" id="U75499">
    <property type="protein sequence ID" value="AAB97118.1"/>
    <property type="status" value="JOINED"/>
    <property type="molecule type" value="Genomic_DNA"/>
</dbReference>
<dbReference type="EMBL" id="U75500">
    <property type="protein sequence ID" value="AAB97118.1"/>
    <property type="status" value="JOINED"/>
    <property type="molecule type" value="Genomic_DNA"/>
</dbReference>
<dbReference type="EMBL" id="U75501">
    <property type="protein sequence ID" value="AAB97118.1"/>
    <property type="status" value="JOINED"/>
    <property type="molecule type" value="Genomic_DNA"/>
</dbReference>
<dbReference type="EMBL" id="U75502">
    <property type="protein sequence ID" value="AAB97118.1"/>
    <property type="status" value="JOINED"/>
    <property type="molecule type" value="Genomic_DNA"/>
</dbReference>
<dbReference type="EMBL" id="U18121">
    <property type="protein sequence ID" value="AAC13782.1"/>
    <property type="molecule type" value="mRNA"/>
</dbReference>
<dbReference type="EMBL" id="X79448">
    <property type="protein sequence ID" value="CAA55967.1"/>
    <property type="molecule type" value="mRNA"/>
</dbReference>
<dbReference type="EMBL" id="X79449">
    <property type="protein sequence ID" value="CAA55968.1"/>
    <property type="molecule type" value="mRNA"/>
</dbReference>
<dbReference type="EMBL" id="X98559">
    <property type="protein sequence ID" value="CAA67169.1"/>
    <property type="molecule type" value="mRNA"/>
</dbReference>
<dbReference type="EMBL" id="X98559">
    <property type="protein sequence ID" value="CAA67170.1"/>
    <property type="molecule type" value="mRNA"/>
</dbReference>
<dbReference type="EMBL" id="BX538232">
    <property type="protein sequence ID" value="CAD98075.1"/>
    <property type="molecule type" value="mRNA"/>
</dbReference>
<dbReference type="EMBL" id="BX640741">
    <property type="protein sequence ID" value="CAE45853.1"/>
    <property type="status" value="ALT_SEQ"/>
    <property type="molecule type" value="mRNA"/>
</dbReference>
<dbReference type="EMBL" id="AL592078">
    <property type="status" value="NOT_ANNOTATED_CDS"/>
    <property type="molecule type" value="Genomic_DNA"/>
</dbReference>
<dbReference type="EMBL" id="AL606500">
    <property type="status" value="NOT_ANNOTATED_CDS"/>
    <property type="molecule type" value="Genomic_DNA"/>
</dbReference>
<dbReference type="EMBL" id="AL691488">
    <property type="status" value="NOT_ANNOTATED_CDS"/>
    <property type="molecule type" value="Genomic_DNA"/>
</dbReference>
<dbReference type="EMBL" id="CH471121">
    <property type="protein sequence ID" value="EAW53183.1"/>
    <property type="molecule type" value="Genomic_DNA"/>
</dbReference>
<dbReference type="EMBL" id="CH471121">
    <property type="protein sequence ID" value="EAW53187.1"/>
    <property type="molecule type" value="Genomic_DNA"/>
</dbReference>
<dbReference type="EMBL" id="BC038227">
    <property type="protein sequence ID" value="AAH38227.1"/>
    <property type="molecule type" value="mRNA"/>
</dbReference>
<dbReference type="CCDS" id="CCDS1071.1">
    <molecule id="P55265-1"/>
</dbReference>
<dbReference type="CCDS" id="CCDS30879.1">
    <molecule id="P55265-5"/>
</dbReference>
<dbReference type="CCDS" id="CCDS44231.1">
    <molecule id="P55265-2"/>
</dbReference>
<dbReference type="PIR" id="S65593">
    <property type="entry name" value="S65593"/>
</dbReference>
<dbReference type="RefSeq" id="NP_001020278.1">
    <molecule id="P55265-5"/>
    <property type="nucleotide sequence ID" value="NM_001025107.3"/>
</dbReference>
<dbReference type="RefSeq" id="NP_001102.3">
    <molecule id="P55265-1"/>
    <property type="nucleotide sequence ID" value="NM_001111.5"/>
</dbReference>
<dbReference type="RefSeq" id="NP_001180424.1">
    <molecule id="P55265-5"/>
    <property type="nucleotide sequence ID" value="NM_001193495.2"/>
</dbReference>
<dbReference type="RefSeq" id="NP_001351975.1">
    <molecule id="P55265-5"/>
    <property type="nucleotide sequence ID" value="NM_001365046.1"/>
</dbReference>
<dbReference type="RefSeq" id="NP_001351976.1">
    <molecule id="P55265-5"/>
    <property type="nucleotide sequence ID" value="NM_001365047.1"/>
</dbReference>
<dbReference type="RefSeq" id="NP_001351977.1">
    <molecule id="P55265-5"/>
    <property type="nucleotide sequence ID" value="NM_001365048.1"/>
</dbReference>
<dbReference type="RefSeq" id="NP_056655.3">
    <molecule id="P55265-2"/>
    <property type="nucleotide sequence ID" value="NM_015840.4"/>
</dbReference>
<dbReference type="RefSeq" id="NP_056656.3">
    <molecule id="P55265-3"/>
    <property type="nucleotide sequence ID" value="NM_015841.4"/>
</dbReference>
<dbReference type="RefSeq" id="XP_006711174.1">
    <property type="nucleotide sequence ID" value="XM_006711111.3"/>
</dbReference>
<dbReference type="RefSeq" id="XP_006711175.1">
    <property type="nucleotide sequence ID" value="XM_006711112.2"/>
</dbReference>
<dbReference type="RefSeq" id="XP_006711176.1">
    <property type="nucleotide sequence ID" value="XM_006711113.2"/>
</dbReference>
<dbReference type="PDB" id="1QBJ">
    <property type="method" value="X-ray"/>
    <property type="resolution" value="2.10 A"/>
    <property type="chains" value="A/B/C=133-209"/>
</dbReference>
<dbReference type="PDB" id="1QGP">
    <property type="method" value="NMR"/>
    <property type="chains" value="A=125-200"/>
</dbReference>
<dbReference type="PDB" id="1XMK">
    <property type="method" value="X-ray"/>
    <property type="resolution" value="0.97 A"/>
    <property type="chains" value="A=294-366"/>
</dbReference>
<dbReference type="PDB" id="2ACJ">
    <property type="method" value="X-ray"/>
    <property type="resolution" value="2.60 A"/>
    <property type="chains" value="A/B/C/D=140-202"/>
</dbReference>
<dbReference type="PDB" id="2GXB">
    <property type="method" value="X-ray"/>
    <property type="resolution" value="2.25 A"/>
    <property type="chains" value="A/B=140-202"/>
</dbReference>
<dbReference type="PDB" id="2L54">
    <property type="method" value="NMR"/>
    <property type="chains" value="A=136-198"/>
</dbReference>
<dbReference type="PDB" id="2MDR">
    <property type="method" value="NMR"/>
    <property type="chains" value="A=708-801"/>
</dbReference>
<dbReference type="PDB" id="3F21">
    <property type="method" value="X-ray"/>
    <property type="resolution" value="2.20 A"/>
    <property type="chains" value="A/B/C=133-209"/>
</dbReference>
<dbReference type="PDB" id="3F22">
    <property type="method" value="X-ray"/>
    <property type="resolution" value="2.50 A"/>
    <property type="chains" value="A/B/C=133-209"/>
</dbReference>
<dbReference type="PDB" id="3F23">
    <property type="method" value="X-ray"/>
    <property type="resolution" value="2.70 A"/>
    <property type="chains" value="A/B/C=133-209"/>
</dbReference>
<dbReference type="PDB" id="3IRQ">
    <property type="method" value="X-ray"/>
    <property type="resolution" value="2.80 A"/>
    <property type="chains" value="A/B/C/D=140-202"/>
</dbReference>
<dbReference type="PDB" id="3IRR">
    <property type="method" value="X-ray"/>
    <property type="resolution" value="2.65 A"/>
    <property type="chains" value="A/B/C/D=140-202"/>
</dbReference>
<dbReference type="PDB" id="5ZU1">
    <property type="method" value="X-ray"/>
    <property type="resolution" value="3.01 A"/>
    <property type="chains" value="A/B/C/D=140-198"/>
</dbReference>
<dbReference type="PDB" id="5ZUO">
    <property type="method" value="X-ray"/>
    <property type="resolution" value="2.90 A"/>
    <property type="chains" value="A/B/C/D=140-202"/>
</dbReference>
<dbReference type="PDB" id="5ZUP">
    <property type="method" value="X-ray"/>
    <property type="resolution" value="2.90 A"/>
    <property type="chains" value="A/B/C/D=140-202"/>
</dbReference>
<dbReference type="PDB" id="7C0I">
    <property type="method" value="X-ray"/>
    <property type="resolution" value="2.40 A"/>
    <property type="chains" value="A/B/C=170-184"/>
</dbReference>
<dbReference type="PDB" id="7ZJ1">
    <property type="method" value="X-ray"/>
    <property type="resolution" value="1.65 A"/>
    <property type="chains" value="A/B=716-797"/>
</dbReference>
<dbReference type="PDB" id="7ZLQ">
    <property type="method" value="X-ray"/>
    <property type="resolution" value="2.80 A"/>
    <property type="chains" value="A/B=716-797"/>
</dbReference>
<dbReference type="PDB" id="8GBC">
    <property type="method" value="NMR"/>
    <property type="chains" value="A=140-202"/>
</dbReference>
<dbReference type="PDB" id="8GBD">
    <property type="method" value="NMR"/>
    <property type="chains" value="A=140-202"/>
</dbReference>
<dbReference type="PDBsum" id="1QBJ"/>
<dbReference type="PDBsum" id="1QGP"/>
<dbReference type="PDBsum" id="1XMK"/>
<dbReference type="PDBsum" id="2ACJ"/>
<dbReference type="PDBsum" id="2GXB"/>
<dbReference type="PDBsum" id="2L54"/>
<dbReference type="PDBsum" id="2MDR"/>
<dbReference type="PDBsum" id="3F21"/>
<dbReference type="PDBsum" id="3F22"/>
<dbReference type="PDBsum" id="3F23"/>
<dbReference type="PDBsum" id="3IRQ"/>
<dbReference type="PDBsum" id="3IRR"/>
<dbReference type="PDBsum" id="5ZU1"/>
<dbReference type="PDBsum" id="5ZUO"/>
<dbReference type="PDBsum" id="5ZUP"/>
<dbReference type="PDBsum" id="7C0I"/>
<dbReference type="PDBsum" id="7ZJ1"/>
<dbReference type="PDBsum" id="7ZLQ"/>
<dbReference type="PDBsum" id="8GBC"/>
<dbReference type="PDBsum" id="8GBD"/>
<dbReference type="SASBDB" id="P55265"/>
<dbReference type="SMR" id="P55265"/>
<dbReference type="BioGRID" id="106617">
    <property type="interactions" value="311"/>
</dbReference>
<dbReference type="CORUM" id="P55265"/>
<dbReference type="DIP" id="DIP-29310N"/>
<dbReference type="FunCoup" id="P55265">
    <property type="interactions" value="3616"/>
</dbReference>
<dbReference type="IntAct" id="P55265">
    <property type="interactions" value="125"/>
</dbReference>
<dbReference type="MINT" id="P55265"/>
<dbReference type="STRING" id="9606.ENSP00000357459"/>
<dbReference type="ChEMBL" id="CHEMBL5465291"/>
<dbReference type="GlyCosmos" id="P55265">
    <property type="glycosylation" value="4 sites, 2 glycans"/>
</dbReference>
<dbReference type="GlyGen" id="P55265">
    <property type="glycosylation" value="13 sites, 2 O-linked glycans (12 sites)"/>
</dbReference>
<dbReference type="iPTMnet" id="P55265"/>
<dbReference type="MetOSite" id="P55265"/>
<dbReference type="PhosphoSitePlus" id="P55265"/>
<dbReference type="SwissPalm" id="P55265"/>
<dbReference type="BioMuta" id="ADAR"/>
<dbReference type="DMDM" id="313104303"/>
<dbReference type="jPOST" id="P55265"/>
<dbReference type="MassIVE" id="P55265"/>
<dbReference type="PaxDb" id="9606-ENSP00000357459"/>
<dbReference type="PeptideAtlas" id="P55265"/>
<dbReference type="ProteomicsDB" id="56826">
    <molecule id="P55265-1"/>
</dbReference>
<dbReference type="ProteomicsDB" id="56827">
    <molecule id="P55265-2"/>
</dbReference>
<dbReference type="ProteomicsDB" id="56828">
    <molecule id="P55265-3"/>
</dbReference>
<dbReference type="ProteomicsDB" id="56829">
    <molecule id="P55265-4"/>
</dbReference>
<dbReference type="ProteomicsDB" id="56830">
    <molecule id="P55265-5"/>
</dbReference>
<dbReference type="Pumba" id="P55265"/>
<dbReference type="Antibodypedia" id="1280">
    <property type="antibodies" value="280 antibodies from 33 providers"/>
</dbReference>
<dbReference type="DNASU" id="103"/>
<dbReference type="Ensembl" id="ENST00000368471.8">
    <molecule id="P55265-5"/>
    <property type="protein sequence ID" value="ENSP00000357456.3"/>
    <property type="gene ID" value="ENSG00000160710.19"/>
</dbReference>
<dbReference type="Ensembl" id="ENST00000368474.9">
    <molecule id="P55265-1"/>
    <property type="protein sequence ID" value="ENSP00000357459.4"/>
    <property type="gene ID" value="ENSG00000160710.19"/>
</dbReference>
<dbReference type="Ensembl" id="ENST00000471068.3">
    <molecule id="P55265-5"/>
    <property type="protein sequence ID" value="ENSP00000518935.1"/>
    <property type="gene ID" value="ENSG00000160710.19"/>
</dbReference>
<dbReference type="Ensembl" id="ENST00000494866.2">
    <molecule id="P55265-5"/>
    <property type="protein sequence ID" value="ENSP00000518936.1"/>
    <property type="gene ID" value="ENSG00000160710.19"/>
</dbReference>
<dbReference type="Ensembl" id="ENST00000529168.2">
    <molecule id="P55265-2"/>
    <property type="protein sequence ID" value="ENSP00000431794.2"/>
    <property type="gene ID" value="ENSG00000160710.19"/>
</dbReference>
<dbReference type="Ensembl" id="ENST00000648231.2">
    <molecule id="P55265-5"/>
    <property type="protein sequence ID" value="ENSP00000497555.1"/>
    <property type="gene ID" value="ENSG00000160710.19"/>
</dbReference>
<dbReference type="Ensembl" id="ENST00000648311.1">
    <molecule id="P55265-5"/>
    <property type="protein sequence ID" value="ENSP00000498137.1"/>
    <property type="gene ID" value="ENSG00000160710.19"/>
</dbReference>
<dbReference type="Ensembl" id="ENST00000648871.2">
    <molecule id="P55265-5"/>
    <property type="protein sequence ID" value="ENSP00000497793.2"/>
    <property type="gene ID" value="ENSG00000160710.19"/>
</dbReference>
<dbReference type="Ensembl" id="ENST00000649022.2">
    <molecule id="P55265-5"/>
    <property type="protein sequence ID" value="ENSP00000496896.2"/>
    <property type="gene ID" value="ENSG00000160710.19"/>
</dbReference>
<dbReference type="Ensembl" id="ENST00000649749.1">
    <molecule id="P55265-5"/>
    <property type="protein sequence ID" value="ENSP00000497210.1"/>
    <property type="gene ID" value="ENSG00000160710.19"/>
</dbReference>
<dbReference type="Ensembl" id="ENST00000681683.1">
    <molecule id="P55265-5"/>
    <property type="protein sequence ID" value="ENSP00000506666.1"/>
    <property type="gene ID" value="ENSG00000160710.19"/>
</dbReference>
<dbReference type="Ensembl" id="ENST00000713632.1">
    <molecule id="P55265-5"/>
    <property type="protein sequence ID" value="ENSP00000518930.1"/>
    <property type="gene ID" value="ENSG00000160710.19"/>
</dbReference>
<dbReference type="Ensembl" id="ENST00000713633.1">
    <molecule id="P55265-5"/>
    <property type="protein sequence ID" value="ENSP00000518931.1"/>
    <property type="gene ID" value="ENSG00000160710.19"/>
</dbReference>
<dbReference type="GeneID" id="103"/>
<dbReference type="KEGG" id="hsa:103"/>
<dbReference type="MANE-Select" id="ENST00000368474.9">
    <property type="protein sequence ID" value="ENSP00000357459.4"/>
    <property type="RefSeq nucleotide sequence ID" value="NM_001111.5"/>
    <property type="RefSeq protein sequence ID" value="NP_001102.3"/>
</dbReference>
<dbReference type="UCSC" id="uc001ffh.4">
    <molecule id="P55265-1"/>
    <property type="organism name" value="human"/>
</dbReference>
<dbReference type="AGR" id="HGNC:225"/>
<dbReference type="CTD" id="103"/>
<dbReference type="DisGeNET" id="103"/>
<dbReference type="GeneCards" id="ADAR"/>
<dbReference type="GeneReviews" id="ADAR"/>
<dbReference type="HGNC" id="HGNC:225">
    <property type="gene designation" value="ADAR"/>
</dbReference>
<dbReference type="HPA" id="ENSG00000160710">
    <property type="expression patterns" value="Low tissue specificity"/>
</dbReference>
<dbReference type="MalaCards" id="ADAR"/>
<dbReference type="MIM" id="127400">
    <property type="type" value="phenotype"/>
</dbReference>
<dbReference type="MIM" id="146920">
    <property type="type" value="gene"/>
</dbReference>
<dbReference type="MIM" id="615010">
    <property type="type" value="phenotype"/>
</dbReference>
<dbReference type="neXtProt" id="NX_P55265"/>
<dbReference type="OpenTargets" id="ENSG00000160710"/>
<dbReference type="Orphanet" id="694356">
    <property type="disease" value="ADAR1-related hereditary spastic paraplegia"/>
</dbReference>
<dbReference type="Orphanet" id="51">
    <property type="disease" value="Aicardi-Goutieres syndrome"/>
</dbReference>
<dbReference type="Orphanet" id="41">
    <property type="disease" value="Dyschromatosis symmetrica hereditaria"/>
</dbReference>
<dbReference type="Orphanet" id="225154">
    <property type="disease" value="Familial infantile bilateral striatal necrosis"/>
</dbReference>
<dbReference type="PharmGKB" id="PA24555"/>
<dbReference type="VEuPathDB" id="HostDB:ENSG00000160710"/>
<dbReference type="eggNOG" id="KOG2777">
    <property type="taxonomic scope" value="Eukaryota"/>
</dbReference>
<dbReference type="GeneTree" id="ENSGT00940000157243"/>
<dbReference type="HOGENOM" id="CLU_005382_0_0_1"/>
<dbReference type="InParanoid" id="P55265"/>
<dbReference type="OMA" id="ERMQMKR"/>
<dbReference type="OrthoDB" id="10268011at2759"/>
<dbReference type="PAN-GO" id="P55265">
    <property type="GO annotations" value="7 GO annotations based on evolutionary models"/>
</dbReference>
<dbReference type="PhylomeDB" id="P55265"/>
<dbReference type="TreeFam" id="TF315806"/>
<dbReference type="BRENDA" id="3.5.4.37">
    <property type="organism ID" value="2681"/>
</dbReference>
<dbReference type="PathwayCommons" id="P55265"/>
<dbReference type="Reactome" id="R-HSA-75102">
    <property type="pathway name" value="C6 deamination of adenosine"/>
</dbReference>
<dbReference type="Reactome" id="R-HSA-77042">
    <property type="pathway name" value="Formation of editosomes by ADAR proteins"/>
</dbReference>
<dbReference type="Reactome" id="R-HSA-909733">
    <property type="pathway name" value="Interferon alpha/beta signaling"/>
</dbReference>
<dbReference type="Reactome" id="R-HSA-9833482">
    <property type="pathway name" value="PKR-mediated signaling"/>
</dbReference>
<dbReference type="SignaLink" id="P55265"/>
<dbReference type="SIGNOR" id="P55265"/>
<dbReference type="BioGRID-ORCS" id="103">
    <property type="hits" value="289 hits in 1164 CRISPR screens"/>
</dbReference>
<dbReference type="CD-CODE" id="91857CE7">
    <property type="entry name" value="Nucleolus"/>
</dbReference>
<dbReference type="CD-CODE" id="DEE660B4">
    <property type="entry name" value="Stress granule"/>
</dbReference>
<dbReference type="ChiTaRS" id="ADAR">
    <property type="organism name" value="human"/>
</dbReference>
<dbReference type="EvolutionaryTrace" id="P55265"/>
<dbReference type="GeneWiki" id="ADAR"/>
<dbReference type="GenomeRNAi" id="103"/>
<dbReference type="Pharos" id="P55265">
    <property type="development level" value="Tbio"/>
</dbReference>
<dbReference type="PRO" id="PR:P55265"/>
<dbReference type="Proteomes" id="UP000005640">
    <property type="component" value="Chromosome 1"/>
</dbReference>
<dbReference type="RNAct" id="P55265">
    <property type="molecule type" value="protein"/>
</dbReference>
<dbReference type="Bgee" id="ENSG00000160710">
    <property type="expression patterns" value="Expressed in endothelial cell and 210 other cell types or tissues"/>
</dbReference>
<dbReference type="ExpressionAtlas" id="P55265">
    <property type="expression patterns" value="baseline and differential"/>
</dbReference>
<dbReference type="GO" id="GO:0005737">
    <property type="term" value="C:cytoplasm"/>
    <property type="evidence" value="ECO:0000314"/>
    <property type="project" value="UniProtKB"/>
</dbReference>
<dbReference type="GO" id="GO:0005829">
    <property type="term" value="C:cytosol"/>
    <property type="evidence" value="ECO:0000304"/>
    <property type="project" value="Reactome"/>
</dbReference>
<dbReference type="GO" id="GO:0016020">
    <property type="term" value="C:membrane"/>
    <property type="evidence" value="ECO:0007005"/>
    <property type="project" value="UniProtKB"/>
</dbReference>
<dbReference type="GO" id="GO:0005739">
    <property type="term" value="C:mitochondrion"/>
    <property type="evidence" value="ECO:0006056"/>
    <property type="project" value="FlyBase"/>
</dbReference>
<dbReference type="GO" id="GO:0005730">
    <property type="term" value="C:nucleolus"/>
    <property type="evidence" value="ECO:0000314"/>
    <property type="project" value="HPA"/>
</dbReference>
<dbReference type="GO" id="GO:0005654">
    <property type="term" value="C:nucleoplasm"/>
    <property type="evidence" value="ECO:0000314"/>
    <property type="project" value="HPA"/>
</dbReference>
<dbReference type="GO" id="GO:0005634">
    <property type="term" value="C:nucleus"/>
    <property type="evidence" value="ECO:0000314"/>
    <property type="project" value="UniProtKB"/>
</dbReference>
<dbReference type="GO" id="GO:0044530">
    <property type="term" value="C:supraspliceosomal complex"/>
    <property type="evidence" value="ECO:0000314"/>
    <property type="project" value="UniProtKB"/>
</dbReference>
<dbReference type="GO" id="GO:0003677">
    <property type="term" value="F:DNA binding"/>
    <property type="evidence" value="ECO:0007669"/>
    <property type="project" value="UniProtKB-KW"/>
</dbReference>
<dbReference type="GO" id="GO:0003726">
    <property type="term" value="F:double-stranded RNA adenosine deaminase activity"/>
    <property type="evidence" value="ECO:0000314"/>
    <property type="project" value="MGI"/>
</dbReference>
<dbReference type="GO" id="GO:0003725">
    <property type="term" value="F:double-stranded RNA binding"/>
    <property type="evidence" value="ECO:0000318"/>
    <property type="project" value="GO_Central"/>
</dbReference>
<dbReference type="GO" id="GO:0046872">
    <property type="term" value="F:metal ion binding"/>
    <property type="evidence" value="ECO:0007669"/>
    <property type="project" value="UniProtKB-KW"/>
</dbReference>
<dbReference type="GO" id="GO:0003723">
    <property type="term" value="F:RNA binding"/>
    <property type="evidence" value="ECO:0007005"/>
    <property type="project" value="UniProtKB"/>
</dbReference>
<dbReference type="GO" id="GO:0008251">
    <property type="term" value="F:tRNA-specific adenosine deaminase activity"/>
    <property type="evidence" value="ECO:0000318"/>
    <property type="project" value="GO_Central"/>
</dbReference>
<dbReference type="GO" id="GO:0006382">
    <property type="term" value="P:adenosine to inosine editing"/>
    <property type="evidence" value="ECO:0000314"/>
    <property type="project" value="UniProtKB"/>
</dbReference>
<dbReference type="GO" id="GO:0016553">
    <property type="term" value="P:base conversion or substitution editing"/>
    <property type="evidence" value="ECO:0000314"/>
    <property type="project" value="MGI"/>
</dbReference>
<dbReference type="GO" id="GO:0098586">
    <property type="term" value="P:cellular response to virus"/>
    <property type="evidence" value="ECO:0007669"/>
    <property type="project" value="Ensembl"/>
</dbReference>
<dbReference type="GO" id="GO:0051607">
    <property type="term" value="P:defense response to virus"/>
    <property type="evidence" value="ECO:0007669"/>
    <property type="project" value="UniProtKB-KW"/>
</dbReference>
<dbReference type="GO" id="GO:0060216">
    <property type="term" value="P:definitive hemopoiesis"/>
    <property type="evidence" value="ECO:0007669"/>
    <property type="project" value="Ensembl"/>
</dbReference>
<dbReference type="GO" id="GO:0030218">
    <property type="term" value="P:erythrocyte differentiation"/>
    <property type="evidence" value="ECO:0007669"/>
    <property type="project" value="Ensembl"/>
</dbReference>
<dbReference type="GO" id="GO:0002244">
    <property type="term" value="P:hematopoietic progenitor cell differentiation"/>
    <property type="evidence" value="ECO:0007669"/>
    <property type="project" value="Ensembl"/>
</dbReference>
<dbReference type="GO" id="GO:0061484">
    <property type="term" value="P:hematopoietic stem cell homeostasis"/>
    <property type="evidence" value="ECO:0007669"/>
    <property type="project" value="Ensembl"/>
</dbReference>
<dbReference type="GO" id="GO:0097284">
    <property type="term" value="P:hepatocyte apoptotic process"/>
    <property type="evidence" value="ECO:0007669"/>
    <property type="project" value="Ensembl"/>
</dbReference>
<dbReference type="GO" id="GO:0045087">
    <property type="term" value="P:innate immune response"/>
    <property type="evidence" value="ECO:0000304"/>
    <property type="project" value="UniProtKB"/>
</dbReference>
<dbReference type="GO" id="GO:0006397">
    <property type="term" value="P:mRNA processing"/>
    <property type="evidence" value="ECO:0007669"/>
    <property type="project" value="UniProtKB-KW"/>
</dbReference>
<dbReference type="GO" id="GO:1903944">
    <property type="term" value="P:negative regulation of hepatocyte apoptotic process"/>
    <property type="evidence" value="ECO:0007669"/>
    <property type="project" value="Ensembl"/>
</dbReference>
<dbReference type="GO" id="GO:1900369">
    <property type="term" value="P:negative regulation of post-transcriptional gene silencing by regulatory ncRNA"/>
    <property type="evidence" value="ECO:0007669"/>
    <property type="project" value="Ensembl"/>
</dbReference>
<dbReference type="GO" id="GO:0044387">
    <property type="term" value="P:negative regulation of protein kinase activity by regulation of protein phosphorylation"/>
    <property type="evidence" value="ECO:0000314"/>
    <property type="project" value="UniProtKB"/>
</dbReference>
<dbReference type="GO" id="GO:0060339">
    <property type="term" value="P:negative regulation of type I interferon-mediated signaling pathway"/>
    <property type="evidence" value="ECO:0007669"/>
    <property type="project" value="Ensembl"/>
</dbReference>
<dbReference type="GO" id="GO:0001649">
    <property type="term" value="P:osteoblast differentiation"/>
    <property type="evidence" value="ECO:0007669"/>
    <property type="project" value="Ensembl"/>
</dbReference>
<dbReference type="GO" id="GO:0045070">
    <property type="term" value="P:positive regulation of viral genome replication"/>
    <property type="evidence" value="ECO:0000314"/>
    <property type="project" value="UniProtKB"/>
</dbReference>
<dbReference type="GO" id="GO:0031054">
    <property type="term" value="P:pre-miRNA processing"/>
    <property type="evidence" value="ECO:0000314"/>
    <property type="project" value="MGI"/>
</dbReference>
<dbReference type="GO" id="GO:0006611">
    <property type="term" value="P:protein export from nucleus"/>
    <property type="evidence" value="ECO:0000314"/>
    <property type="project" value="UniProtKB"/>
</dbReference>
<dbReference type="GO" id="GO:0006606">
    <property type="term" value="P:protein import into nucleus"/>
    <property type="evidence" value="ECO:0000314"/>
    <property type="project" value="UniProtKB"/>
</dbReference>
<dbReference type="GO" id="GO:0035455">
    <property type="term" value="P:response to interferon-alpha"/>
    <property type="evidence" value="ECO:0000314"/>
    <property type="project" value="UniProtKB"/>
</dbReference>
<dbReference type="GO" id="GO:0009615">
    <property type="term" value="P:response to virus"/>
    <property type="evidence" value="ECO:0000315"/>
    <property type="project" value="UniProtKB"/>
</dbReference>
<dbReference type="GO" id="GO:0070922">
    <property type="term" value="P:RISC complex assembly"/>
    <property type="evidence" value="ECO:0000314"/>
    <property type="project" value="MGI"/>
</dbReference>
<dbReference type="GO" id="GO:0006396">
    <property type="term" value="P:RNA processing"/>
    <property type="evidence" value="ECO:0000318"/>
    <property type="project" value="GO_Central"/>
</dbReference>
<dbReference type="GO" id="GO:0002566">
    <property type="term" value="P:somatic diversification of immune receptors via somatic mutation"/>
    <property type="evidence" value="ECO:0007669"/>
    <property type="project" value="Ensembl"/>
</dbReference>
<dbReference type="CDD" id="cd19913">
    <property type="entry name" value="DSRM_DRADA_rpt1"/>
    <property type="match status" value="1"/>
</dbReference>
<dbReference type="CDD" id="cd19914">
    <property type="entry name" value="DSRM_DRADA_rpt2"/>
    <property type="match status" value="1"/>
</dbReference>
<dbReference type="CDD" id="cd19915">
    <property type="entry name" value="DSRM_DRADA_rpt3"/>
    <property type="match status" value="1"/>
</dbReference>
<dbReference type="FunFam" id="1.10.10.10:FF:000412">
    <property type="entry name" value="Double-stranded RNA-specific adenosine deaminase"/>
    <property type="match status" value="1"/>
</dbReference>
<dbReference type="FunFam" id="1.10.10.10:FF:000313">
    <property type="entry name" value="double-stranded RNA-specific adenosine deaminase isoform X4"/>
    <property type="match status" value="1"/>
</dbReference>
<dbReference type="FunFam" id="3.30.160.20:FF:000005">
    <property type="entry name" value="Putative double-stranded RNA-specific adenosine deaminase"/>
    <property type="match status" value="3"/>
</dbReference>
<dbReference type="Gene3D" id="3.30.160.20">
    <property type="match status" value="3"/>
</dbReference>
<dbReference type="Gene3D" id="1.10.10.10">
    <property type="entry name" value="Winged helix-like DNA-binding domain superfamily/Winged helix DNA-binding domain"/>
    <property type="match status" value="2"/>
</dbReference>
<dbReference type="InterPro" id="IPR002466">
    <property type="entry name" value="A_deamin"/>
</dbReference>
<dbReference type="InterPro" id="IPR044456">
    <property type="entry name" value="ADAR1_DSRM_1"/>
</dbReference>
<dbReference type="InterPro" id="IPR044457">
    <property type="entry name" value="ADAR1_DSRM_3"/>
</dbReference>
<dbReference type="InterPro" id="IPR014720">
    <property type="entry name" value="dsRBD_dom"/>
</dbReference>
<dbReference type="InterPro" id="IPR036388">
    <property type="entry name" value="WH-like_DNA-bd_sf"/>
</dbReference>
<dbReference type="InterPro" id="IPR036390">
    <property type="entry name" value="WH_DNA-bd_sf"/>
</dbReference>
<dbReference type="InterPro" id="IPR042371">
    <property type="entry name" value="Z_dom"/>
</dbReference>
<dbReference type="PANTHER" id="PTHR10910:SF107">
    <property type="entry name" value="DOUBLE-STRANDED RNA-SPECIFIC ADENOSINE DEAMINASE"/>
    <property type="match status" value="1"/>
</dbReference>
<dbReference type="PANTHER" id="PTHR10910">
    <property type="entry name" value="EUKARYOTE SPECIFIC DSRNA BINDING PROTEIN"/>
    <property type="match status" value="1"/>
</dbReference>
<dbReference type="Pfam" id="PF02137">
    <property type="entry name" value="A_deamin"/>
    <property type="match status" value="1"/>
</dbReference>
<dbReference type="Pfam" id="PF00035">
    <property type="entry name" value="dsrm"/>
    <property type="match status" value="3"/>
</dbReference>
<dbReference type="Pfam" id="PF02295">
    <property type="entry name" value="z-alpha"/>
    <property type="match status" value="2"/>
</dbReference>
<dbReference type="SMART" id="SM00552">
    <property type="entry name" value="ADEAMc"/>
    <property type="match status" value="1"/>
</dbReference>
<dbReference type="SMART" id="SM00358">
    <property type="entry name" value="DSRM"/>
    <property type="match status" value="3"/>
</dbReference>
<dbReference type="SMART" id="SM00550">
    <property type="entry name" value="Zalpha"/>
    <property type="match status" value="2"/>
</dbReference>
<dbReference type="SUPFAM" id="SSF54768">
    <property type="entry name" value="dsRNA-binding domain-like"/>
    <property type="match status" value="3"/>
</dbReference>
<dbReference type="SUPFAM" id="SSF46785">
    <property type="entry name" value="Winged helix' DNA-binding domain"/>
    <property type="match status" value="2"/>
</dbReference>
<dbReference type="PROSITE" id="PS50141">
    <property type="entry name" value="A_DEAMIN_EDITASE"/>
    <property type="match status" value="1"/>
</dbReference>
<dbReference type="PROSITE" id="PS50137">
    <property type="entry name" value="DS_RBD"/>
    <property type="match status" value="3"/>
</dbReference>
<dbReference type="PROSITE" id="PS50139">
    <property type="entry name" value="Z_BINDING"/>
    <property type="match status" value="2"/>
</dbReference>
<evidence type="ECO:0000250" key="1">
    <source>
        <dbReference type="UniProtKB" id="P55266"/>
    </source>
</evidence>
<evidence type="ECO:0000255" key="2">
    <source>
        <dbReference type="PROSITE-ProRule" id="PRU00073"/>
    </source>
</evidence>
<evidence type="ECO:0000255" key="3">
    <source>
        <dbReference type="PROSITE-ProRule" id="PRU00240"/>
    </source>
</evidence>
<evidence type="ECO:0000255" key="4">
    <source>
        <dbReference type="PROSITE-ProRule" id="PRU00266"/>
    </source>
</evidence>
<evidence type="ECO:0000256" key="5">
    <source>
        <dbReference type="SAM" id="MobiDB-lite"/>
    </source>
</evidence>
<evidence type="ECO:0000269" key="6">
    <source>
    </source>
</evidence>
<evidence type="ECO:0000269" key="7">
    <source>
    </source>
</evidence>
<evidence type="ECO:0000269" key="8">
    <source>
    </source>
</evidence>
<evidence type="ECO:0000269" key="9">
    <source>
    </source>
</evidence>
<evidence type="ECO:0000269" key="10">
    <source>
    </source>
</evidence>
<evidence type="ECO:0000269" key="11">
    <source>
    </source>
</evidence>
<evidence type="ECO:0000269" key="12">
    <source>
    </source>
</evidence>
<evidence type="ECO:0000269" key="13">
    <source>
    </source>
</evidence>
<evidence type="ECO:0000269" key="14">
    <source>
    </source>
</evidence>
<evidence type="ECO:0000269" key="15">
    <source>
    </source>
</evidence>
<evidence type="ECO:0000269" key="16">
    <source>
    </source>
</evidence>
<evidence type="ECO:0000269" key="17">
    <source>
    </source>
</evidence>
<evidence type="ECO:0000269" key="18">
    <source>
    </source>
</evidence>
<evidence type="ECO:0000269" key="19">
    <source>
    </source>
</evidence>
<evidence type="ECO:0000269" key="20">
    <source>
    </source>
</evidence>
<evidence type="ECO:0000269" key="21">
    <source>
    </source>
</evidence>
<evidence type="ECO:0000269" key="22">
    <source>
    </source>
</evidence>
<evidence type="ECO:0000269" key="23">
    <source>
    </source>
</evidence>
<evidence type="ECO:0000269" key="24">
    <source>
    </source>
</evidence>
<evidence type="ECO:0000269" key="25">
    <source>
    </source>
</evidence>
<evidence type="ECO:0000269" key="26">
    <source>
    </source>
</evidence>
<evidence type="ECO:0000269" key="27">
    <source>
    </source>
</evidence>
<evidence type="ECO:0000269" key="28">
    <source>
    </source>
</evidence>
<evidence type="ECO:0000269" key="29">
    <source>
    </source>
</evidence>
<evidence type="ECO:0000269" key="30">
    <source>
    </source>
</evidence>
<evidence type="ECO:0000269" key="31">
    <source>
    </source>
</evidence>
<evidence type="ECO:0000269" key="32">
    <source>
    </source>
</evidence>
<evidence type="ECO:0000269" key="33">
    <source>
    </source>
</evidence>
<evidence type="ECO:0000269" key="34">
    <source>
    </source>
</evidence>
<evidence type="ECO:0000269" key="35">
    <source>
    </source>
</evidence>
<evidence type="ECO:0000269" key="36">
    <source>
    </source>
</evidence>
<evidence type="ECO:0000269" key="37">
    <source>
    </source>
</evidence>
<evidence type="ECO:0000269" key="38">
    <source ref="4"/>
</evidence>
<evidence type="ECO:0000303" key="39">
    <source>
    </source>
</evidence>
<evidence type="ECO:0000303" key="40">
    <source>
    </source>
</evidence>
<evidence type="ECO:0000303" key="41">
    <source ref="4"/>
</evidence>
<evidence type="ECO:0000305" key="42"/>
<evidence type="ECO:0007744" key="43">
    <source>
        <dbReference type="PDB" id="2ACJ"/>
    </source>
</evidence>
<evidence type="ECO:0007744" key="44">
    <source>
    </source>
</evidence>
<evidence type="ECO:0007744" key="45">
    <source>
    </source>
</evidence>
<evidence type="ECO:0007744" key="46">
    <source>
    </source>
</evidence>
<evidence type="ECO:0007744" key="47">
    <source>
    </source>
</evidence>
<evidence type="ECO:0007744" key="48">
    <source>
    </source>
</evidence>
<evidence type="ECO:0007744" key="49">
    <source>
    </source>
</evidence>
<evidence type="ECO:0007744" key="50">
    <source>
    </source>
</evidence>
<evidence type="ECO:0007744" key="51">
    <source>
    </source>
</evidence>
<evidence type="ECO:0007744" key="52">
    <source>
    </source>
</evidence>
<evidence type="ECO:0007744" key="53">
    <source>
    </source>
</evidence>
<evidence type="ECO:0007744" key="54">
    <source>
    </source>
</evidence>
<evidence type="ECO:0007744" key="55">
    <source>
    </source>
</evidence>
<evidence type="ECO:0007829" key="56">
    <source>
        <dbReference type="PDB" id="1QBJ"/>
    </source>
</evidence>
<evidence type="ECO:0007829" key="57">
    <source>
        <dbReference type="PDB" id="1QGP"/>
    </source>
</evidence>
<evidence type="ECO:0007829" key="58">
    <source>
        <dbReference type="PDB" id="1XMK"/>
    </source>
</evidence>
<evidence type="ECO:0007829" key="59">
    <source>
        <dbReference type="PDB" id="7ZJ1"/>
    </source>
</evidence>
<comment type="function">
    <text evidence="9 14 16 18 20 22 27 28 29 30 31 32 35 36">Catalyzes the hydrolytic deamination of adenosine to inosine in double-stranded RNA (dsRNA) referred to as A-to-I RNA editing (PubMed:12618436, PubMed:7565688, PubMed:7972084). This may affect gene expression and function in a number of ways that include mRNA translation by changing codons and hence the amino acid sequence of proteins since the translational machinery read the inosine as a guanosine; pre-mRNA splicing by altering splice site recognition sequences; RNA stability by changing sequences involved in nuclease recognition; genetic stability in the case of RNA virus genomes by changing sequences during viral RNA replication; and RNA structure-dependent activities such as microRNA production or targeting or protein-RNA interactions. Can edit both viral and cellular RNAs and can edit RNAs at multiple sites (hyper-editing) or at specific sites (site-specific editing). Its cellular RNA substrates include: bladder cancer-associated protein (BLCAP), neurotransmitter receptors for glutamate (GRIA2) and serotonin (HTR2C) and GABA receptor (GABRA3). Site-specific RNA editing of transcripts encoding these proteins results in amino acid substitutions which consequently alters their functional activities. Exhibits low-level editing at the GRIA2 Q/R site, but edits efficiently at the R/G site and HOTSPOT1. Its viral RNA substrates include: hepatitis C virus (HCV), vesicular stomatitis virus (VSV), measles virus (MV), hepatitis delta virus (HDV), and human immunodeficiency virus type 1 (HIV-1). Exhibits either a proviral (HDV, MV, VSV and HIV-1) or an antiviral effect (HCV) and this can be editing-dependent (HDV and HCV), editing-independent (VSV and MV) or both (HIV-1). Impairs HCV replication via RNA editing at multiple sites. Enhances the replication of MV, VSV and HIV-1 through an editing-independent mechanism via suppression of EIF2AK2/PKR activation and function. Stimulates both the release and infectivity of HIV-1 viral particles by an editing-dependent mechanism where it associates with viral RNAs and edits adenosines in the 5'UTR and the Rev and Tat coding sequence. Can enhance viral replication of HDV via A-to-I editing at a site designated as amber/W, thereby changing an UAG amber stop codon to an UIG tryptophan (W) codon that permits synthesis of the large delta antigen (L-HDAg) which has a key role in the assembly of viral particles. However, high levels of ADAR1 inhibit HDV replication.</text>
</comment>
<comment type="catalytic activity">
    <reaction evidence="9 35 36">
        <text>adenosine in double-stranded RNA + H2O + H(+) = inosine in double-stranded RNA + NH4(+)</text>
        <dbReference type="Rhea" id="RHEA:10120"/>
        <dbReference type="Rhea" id="RHEA-COMP:13885"/>
        <dbReference type="Rhea" id="RHEA-COMP:13886"/>
        <dbReference type="ChEBI" id="CHEBI:15377"/>
        <dbReference type="ChEBI" id="CHEBI:15378"/>
        <dbReference type="ChEBI" id="CHEBI:28938"/>
        <dbReference type="ChEBI" id="CHEBI:74411"/>
        <dbReference type="ChEBI" id="CHEBI:82852"/>
        <dbReference type="EC" id="3.5.4.37"/>
    </reaction>
</comment>
<comment type="subunit">
    <text evidence="7 8 9 17 22 24 25 26 27 34">Homodimer. Homodimerization is essential for its catalytic activity (PubMed:12618436). Isoform 5 can form heterodimers with ADARB1/ADAR2. Isoform 1 interacts with ILF2/NF45 and ILF3/NF90 (PubMed:16055709). Binding to ILF3/NF90 up-regulates ILF3-mediated gene expression. Isoform 1 and isoform 5 (via DRBM 3 domain) interact with TNPO1 (PubMed:19124606, PubMed:24753571). Isoform 5 (via DRBM domains) interacts with XPO5 (PubMed:19124606). Isoform 1 and isoform 5 can interact with EIF2AK2/PKR and UPF1 (PubMed:17079286, PubMed:18362360).</text>
</comment>
<comment type="interaction">
    <interactant intactId="EBI-2462104">
        <id>P55265</id>
    </interactant>
    <interactant intactId="EBI-372899">
        <id>Q13148</id>
        <label>TARDBP</label>
    </interactant>
    <organismsDiffer>false</organismsDiffer>
    <experiments>3</experiments>
</comment>
<comment type="interaction">
    <interactant intactId="EBI-2462104">
        <id>P55265</id>
    </interactant>
    <interactant intactId="EBI-373471">
        <id>Q92900</id>
        <label>UPF1</label>
    </interactant>
    <organismsDiffer>false</organismsDiffer>
    <experiments>3</experiments>
</comment>
<comment type="interaction">
    <interactant intactId="EBI-2462104">
        <id>P55265</id>
    </interactant>
    <interactant intactId="EBI-2547442">
        <id>P03496</id>
        <label>NS</label>
    </interactant>
    <organismsDiffer>true</organismsDiffer>
    <experiments>8</experiments>
</comment>
<comment type="interaction">
    <interactant intactId="EBI-2462104">
        <id>P55265</id>
    </interactant>
    <interactant intactId="EBI-9825968">
        <id>PRO_0000037965</id>
        <dbReference type="UniProtKB" id="P14340"/>
    </interactant>
    <organismsDiffer>true</organismsDiffer>
    <experiments>2</experiments>
</comment>
<comment type="interaction">
    <interactant intactId="EBI-2462104">
        <id>P55265</id>
    </interactant>
    <interactant intactId="EBI-6858501">
        <id>PRO_0000045599</id>
        <dbReference type="UniProtKB" id="Q99IB8"/>
    </interactant>
    <organismsDiffer>true</organismsDiffer>
    <experiments>3</experiments>
</comment>
<comment type="interaction">
    <interactant intactId="EBI-6913056">
        <id>P55265-1</id>
    </interactant>
    <interactant intactId="EBI-395506">
        <id>Q9UPY3</id>
        <label>DICER1</label>
    </interactant>
    <organismsDiffer>false</organismsDiffer>
    <experiments>4</experiments>
</comment>
<comment type="interaction">
    <interactant intactId="EBI-6913056">
        <id>P55265-1</id>
    </interactant>
    <interactant intactId="EBI-978581">
        <id>Q15633</id>
        <label>TARBP2</label>
    </interactant>
    <organismsDiffer>false</organismsDiffer>
    <experiments>2</experiments>
</comment>
<comment type="interaction">
    <interactant intactId="EBI-6913210">
        <id>P55265-5</id>
    </interactant>
    <interactant intactId="EBI-395506">
        <id>Q9UPY3</id>
        <label>DICER1</label>
    </interactant>
    <organismsDiffer>false</organismsDiffer>
    <experiments>8</experiments>
</comment>
<comment type="interaction">
    <interactant intactId="EBI-6913210">
        <id>P55265-5</id>
    </interactant>
    <interactant intactId="EBI-978581">
        <id>Q15633</id>
        <label>TARBP2</label>
    </interactant>
    <organismsDiffer>false</organismsDiffer>
    <experiments>3</experiments>
</comment>
<comment type="subcellular location">
    <molecule>Isoform 1</molecule>
    <subcellularLocation>
        <location evidence="35">Cytoplasm</location>
    </subcellularLocation>
    <subcellularLocation>
        <location evidence="34 35">Nucleus</location>
    </subcellularLocation>
    <text evidence="34 35">Shuttles between the cytoplasm and nucleus (PubMed:24753571, PubMed:7565688). Nuclear import is mediated by TNPO1 (PubMed:24753571).</text>
</comment>
<comment type="subcellular location">
    <molecule>Isoform 5</molecule>
    <subcellularLocation>
        <location evidence="26">Cytoplasm</location>
    </subcellularLocation>
    <subcellularLocation>
        <location evidence="26 35">Nucleus</location>
    </subcellularLocation>
    <subcellularLocation>
        <location evidence="10">Nucleus</location>
        <location evidence="10">Nucleolus</location>
    </subcellularLocation>
    <text evidence="26">Predominantly nuclear but can shuttle between nucleus and cytoplasm. TNPO1 can mediate its nuclear import whereas XPO5 can mediate its nuclear export.</text>
</comment>
<comment type="alternative products">
    <event type="alternative promoter"/>
    <event type="alternative splicing"/>
    <isoform>
        <id>P55265-1</id>
        <name>1</name>
        <name>ADAR-a</name>
        <name>ADAR1L</name>
        <name>p150</name>
        <sequence type="displayed"/>
    </isoform>
    <isoform>
        <id>P55265-2</id>
        <name>2</name>
        <name>ADAR-b</name>
        <sequence type="described" ref="VSP_008874"/>
    </isoform>
    <isoform>
        <id>P55265-3</id>
        <name>3</name>
        <name>ADAR-c</name>
        <sequence type="described" ref="VSP_008873 VSP_008874"/>
    </isoform>
    <isoform>
        <id>P55265-4</id>
        <name>4</name>
        <sequence type="described" ref="VSP_008872"/>
    </isoform>
    <isoform>
        <id>P55265-5</id>
        <name>5</name>
        <name>ADAR1S</name>
        <name>p110</name>
        <sequence type="described" ref="VSP_019235"/>
    </isoform>
</comment>
<comment type="tissue specificity">
    <text evidence="24 36">Ubiquitously expressed, highest levels were found in brain and lung (PubMed:7972084). Isoform 5 is expressed at higher levels in astrocytomas as compared to normal brain tissue and expression increases strikingly with the severity of the tumor, being higher in the most aggressive tumors.</text>
</comment>
<comment type="induction">
    <text evidence="6 35">Isoform 1 is induced by interferon alpha. Isoform 5 is constitutively expressed.</text>
</comment>
<comment type="domain">
    <text evidence="26 34">The third dsRNA-binding domain (DRBM 3) contains an additional N-terminal alpha-helix that is part of a bi-partite nuclear localization signal, together with the sequence immediately C-terminal to DRBM 3. The presence of DRBM 3 is important to bring together the N-terminal and the C-terminal part of the bi-partite nuclear localization signal for import mediated by TNPO1 (PubMed:24753571). RNA binding interferes with nuclear import (PubMed:19124606, PubMed:24753571).</text>
</comment>
<comment type="domain">
    <text evidence="2 7 8 19">The first Z-binding domain binds Z-DNA.</text>
</comment>
<comment type="PTM">
    <text evidence="18">Sumoylation reduces RNA-editing activity.</text>
</comment>
<comment type="disease" evidence="11 12 15">
    <disease id="DI-01510">
        <name>Dyschromatosis symmetrica hereditaria</name>
        <acronym>DSH</acronym>
        <description>An autosomal dominant pigmentary genodermatosis characterized by a mixture of hyperpigmented and hypopigmented macules distributed on the face and the dorsal parts of the hands and feet, that appear in infancy or early childhood.</description>
        <dbReference type="MIM" id="127400"/>
    </disease>
    <text>The disease is caused by variants affecting the gene represented in this entry.</text>
</comment>
<comment type="disease" evidence="33">
    <disease id="DI-03668">
        <name>Aicardi-Goutieres syndrome 6</name>
        <acronym>AGS6</acronym>
        <description>A form of Aicardi-Goutieres syndrome, a genetically heterogeneous disease characterized by cerebral atrophy, leukoencephalopathy, intracranial calcifications, chronic cerebrospinal fluid (CSF) lymphocytosis, increased CSF alpha-interferon, and negative serologic investigations for common prenatal infection. Clinical features as thrombocytopenia, hepatosplenomegaly and elevated hepatic transaminases along with intermittent fever may erroneously suggest an infective process. Severe neurological dysfunctions manifest in infancy as progressive microcephaly, spasticity, dystonic posturing and profound psychomotor retardation. Death often occurs in early childhood.</description>
        <dbReference type="MIM" id="615010"/>
    </disease>
    <text>The disease is caused by variants affecting the gene represented in this entry.</text>
</comment>
<comment type="miscellaneous">
    <molecule>Isoform 1</molecule>
    <text>Produced by alternative promoter usage.</text>
</comment>
<comment type="miscellaneous">
    <molecule>Isoform 2</molecule>
    <text evidence="42">Produced by alternative splicing of isoform 1.</text>
</comment>
<comment type="miscellaneous">
    <molecule>Isoform 3</molecule>
    <text evidence="42">Produced by alternative splicing of isoform 1.</text>
</comment>
<comment type="miscellaneous">
    <molecule>Isoform 4</molecule>
    <text evidence="42">Produced by alternative splicing of isoform 1.</text>
</comment>
<comment type="miscellaneous">
    <molecule>Isoform 5</molecule>
    <text evidence="42">Produced by alternative promoter usage.</text>
</comment>
<comment type="caution">
    <text evidence="42">The N-terminus of isoform 4 has been derived from EST and genomic sequences.</text>
</comment>
<comment type="sequence caution" evidence="42">
    <conflict type="erroneous termination">
        <sequence resource="EMBL-CDS" id="CAE45853"/>
    </conflict>
    <text>Extended C-terminus.</text>
</comment>
<feature type="chain" id="PRO_0000171774" description="Double-stranded RNA-specific adenosine deaminase">
    <location>
        <begin position="1"/>
        <end position="1226"/>
    </location>
</feature>
<feature type="domain" description="Z-binding 1" evidence="2 7 8 19">
    <location>
        <begin position="133"/>
        <end position="199"/>
    </location>
</feature>
<feature type="domain" description="Z-binding 2" evidence="2">
    <location>
        <begin position="293"/>
        <end position="357"/>
    </location>
</feature>
<feature type="domain" description="DRBM 1" evidence="4">
    <location>
        <begin position="503"/>
        <end position="571"/>
    </location>
</feature>
<feature type="domain" description="DRBM 2" evidence="4">
    <location>
        <begin position="614"/>
        <end position="682"/>
    </location>
</feature>
<feature type="domain" description="DRBM 3" evidence="4 34">
    <location>
        <begin position="726"/>
        <end position="794"/>
    </location>
</feature>
<feature type="domain" description="A to I editase" evidence="3">
    <location>
        <begin position="886"/>
        <end position="1221"/>
    </location>
</feature>
<feature type="region of interest" description="Interaction with Z-DNA" evidence="7 8 19">
    <location>
        <begin position="133"/>
        <end position="202"/>
    </location>
</feature>
<feature type="region of interest" description="Disordered" evidence="5">
    <location>
        <begin position="208"/>
        <end position="238"/>
    </location>
</feature>
<feature type="region of interest" description="Disordered" evidence="5">
    <location>
        <begin position="258"/>
        <end position="286"/>
    </location>
</feature>
<feature type="region of interest" description="Disordered" evidence="5">
    <location>
        <begin position="574"/>
        <end position="610"/>
    </location>
</feature>
<feature type="region of interest" description="N-terminal extension of DRBM 3 and constituent of a bi-partite nuclear localization signal" evidence="34">
    <location>
        <begin position="716"/>
        <end position="725"/>
    </location>
</feature>
<feature type="region of interest" description="C-terminal extension of DRBM 3 and constituent of a bi-partite nuclear localization signal" evidence="34">
    <location>
        <begin position="795"/>
        <end position="801"/>
    </location>
</feature>
<feature type="compositionally biased region" description="Basic and acidic residues" evidence="5">
    <location>
        <begin position="574"/>
        <end position="597"/>
    </location>
</feature>
<feature type="compositionally biased region" description="Polar residues" evidence="5">
    <location>
        <begin position="600"/>
        <end position="610"/>
    </location>
</feature>
<feature type="active site" description="Proton donor" evidence="3">
    <location>
        <position position="912"/>
    </location>
</feature>
<feature type="binding site" evidence="3">
    <location>
        <position position="910"/>
    </location>
    <ligand>
        <name>Zn(2+)</name>
        <dbReference type="ChEBI" id="CHEBI:29105"/>
    </ligand>
</feature>
<feature type="binding site" evidence="3">
    <location>
        <position position="966"/>
    </location>
    <ligand>
        <name>Zn(2+)</name>
        <dbReference type="ChEBI" id="CHEBI:29105"/>
    </ligand>
</feature>
<feature type="binding site" evidence="3">
    <location>
        <position position="1036"/>
    </location>
    <ligand>
        <name>Zn(2+)</name>
        <dbReference type="ChEBI" id="CHEBI:29105"/>
    </ligand>
</feature>
<feature type="modified residue" description="Asymmetric dimethylarginine" evidence="52">
    <location>
        <position position="26"/>
    </location>
</feature>
<feature type="modified residue" description="Phosphoserine" evidence="1">
    <location>
        <position position="285"/>
    </location>
</feature>
<feature type="modified residue" description="Phosphoserine" evidence="51">
    <location>
        <position position="481"/>
    </location>
</feature>
<feature type="modified residue" description="Phosphothreonine" evidence="47 48 51">
    <location>
        <position position="601"/>
    </location>
</feature>
<feature type="modified residue" description="Phosphothreonine" evidence="51">
    <location>
        <position position="603"/>
    </location>
</feature>
<feature type="modified residue" description="Phosphoserine" evidence="47">
    <location>
        <position position="614"/>
    </location>
</feature>
<feature type="modified residue" description="Phosphoserine" evidence="51">
    <location>
        <position position="629"/>
    </location>
</feature>
<feature type="modified residue" description="Phosphoserine" evidence="51">
    <location>
        <position position="636"/>
    </location>
</feature>
<feature type="modified residue" description="Phosphothreonine" evidence="44 45 46 48 49 51">
    <location>
        <position position="808"/>
    </location>
</feature>
<feature type="modified residue" description="Phosphoserine" evidence="51">
    <location>
        <position position="814"/>
    </location>
</feature>
<feature type="modified residue" description="Phosphoserine" evidence="47">
    <location>
        <position position="823"/>
    </location>
</feature>
<feature type="modified residue" description="Phosphoserine" evidence="47 49 50 51">
    <location>
        <position position="825"/>
    </location>
</feature>
<feature type="cross-link" description="Glycyl lysine isopeptide (Lys-Gly) (interchain with G-Cter in SUMO2)" evidence="55">
    <location>
        <position position="384"/>
    </location>
</feature>
<feature type="cross-link" description="Glycyl lysine isopeptide (Lys-Gly) (interchain with G-Cter in SUMO2)" evidence="55">
    <location>
        <position position="408"/>
    </location>
</feature>
<feature type="cross-link" description="Glycyl lysine isopeptide (Lys-Gly) (interchain with G-Cter in SUMO); alternate">
    <location>
        <position position="418"/>
    </location>
</feature>
<feature type="cross-link" description="Glycyl lysine isopeptide (Lys-Gly) (interchain with G-Cter in SUMO1); alternate" evidence="53">
    <location>
        <position position="418"/>
    </location>
</feature>
<feature type="cross-link" description="Glycyl lysine isopeptide (Lys-Gly) (interchain with G-Cter in SUMO2); alternate" evidence="53 54 55">
    <location>
        <position position="418"/>
    </location>
</feature>
<feature type="cross-link" description="Glycyl lysine isopeptide (Lys-Gly) (interchain with G-Cter in SUMO2)" evidence="55">
    <location>
        <position position="580"/>
    </location>
</feature>
<feature type="cross-link" description="Glycyl lysine isopeptide (Lys-Gly) (interchain with G-Cter in SUMO2)" evidence="55">
    <location>
        <position position="875"/>
    </location>
</feature>
<feature type="splice variant" id="VSP_019235" description="In isoform 5." evidence="41">
    <location>
        <begin position="1"/>
        <end position="295"/>
    </location>
</feature>
<feature type="splice variant" id="VSP_008872" description="In isoform 4." evidence="39">
    <original>MNPRQ</original>
    <variation>MMSPICDQTIDSRLKVEKATWWGRVGGGSRPHWQPPGVRPCPEEVQDP</variation>
    <location>
        <begin position="1"/>
        <end position="5"/>
    </location>
</feature>
<feature type="splice variant" id="VSP_008873" description="In isoform 3." evidence="42">
    <location>
        <begin position="694"/>
        <end position="712"/>
    </location>
</feature>
<feature type="splice variant" id="VSP_008874" description="In isoform 2 and isoform 3." evidence="42">
    <location>
        <begin position="807"/>
        <end position="832"/>
    </location>
</feature>
<feature type="sequence variant" id="VAR_048725" description="In dbSNP:rs1466731." evidence="13 23 35 36 37 38">
    <original>R</original>
    <variation>G</variation>
    <location>
        <position position="100"/>
    </location>
</feature>
<feature type="sequence variant" id="VAR_069535" description="In AGS6; dbSNP:rs145588689." evidence="33">
    <original>P</original>
    <variation>A</variation>
    <location>
        <position position="193"/>
    </location>
</feature>
<feature type="sequence variant" id="VAR_017240" description="In dbSNP:rs2229857." evidence="23 35 37 38">
    <original>K</original>
    <variation>R</variation>
    <location>
        <position position="384"/>
    </location>
</feature>
<feature type="sequence variant" id="VAR_024407" description="In dbSNP:rs17843865.">
    <original>Y</original>
    <variation>C</variation>
    <location>
        <position position="587"/>
    </location>
</feature>
<feature type="sequence variant" id="VAR_035805" description="In a breast cancer sample; somatic mutation; dbSNP:rs144119808." evidence="21">
    <original>E</original>
    <variation>V</variation>
    <location>
        <position position="806"/>
    </location>
</feature>
<feature type="sequence variant" id="VAR_069536" description="In AGS6; dbSNP:rs398122893." evidence="33">
    <original>A</original>
    <variation>T</variation>
    <location>
        <position position="870"/>
    </location>
</feature>
<feature type="sequence variant" id="VAR_069537" description="In AGS6; dbSNP:rs398122897." evidence="33">
    <original>I</original>
    <variation>T</variation>
    <location>
        <position position="872"/>
    </location>
</feature>
<feature type="sequence variant" id="VAR_069538" description="In AGS6; dbSNP:rs398122892." evidence="33">
    <original>R</original>
    <variation>H</variation>
    <location>
        <position position="892"/>
    </location>
</feature>
<feature type="sequence variant" id="VAR_017604" description="In DSH; dbSNP:rs28936680." evidence="11">
    <original>L</original>
    <variation>P</variation>
    <location>
        <position position="923"/>
    </location>
</feature>
<feature type="sequence variant" id="VAR_021729" description="In DSH." evidence="12">
    <original>C</original>
    <variation>F</variation>
    <location>
        <position position="966"/>
    </location>
</feature>
<feature type="sequence variant" id="VAR_069539" description="In AGS6; dbSNP:rs398122896." evidence="33">
    <original>K</original>
    <variation>N</variation>
    <location>
        <position position="999"/>
    </location>
</feature>
<feature type="sequence variant" id="VAR_069540" description="In AGS6; dbSNP:rs398122822." evidence="33">
    <original>G</original>
    <variation>R</variation>
    <location>
        <position position="1007"/>
    </location>
</feature>
<feature type="sequence variant" id="VAR_069541" description="In AGS6; dbSNP:rs398122895." evidence="33">
    <original>Y</original>
    <variation>F</variation>
    <location>
        <position position="1112"/>
    </location>
</feature>
<feature type="sequence variant" id="VAR_069542" description="In AGS6; dbSNP:rs398122894." evidence="33">
    <original>D</original>
    <variation>H</variation>
    <location>
        <position position="1113"/>
    </location>
</feature>
<feature type="sequence variant" id="VAR_026669" description="In DSH; dbSNP:rs1044845711." evidence="15">
    <original>R</original>
    <variation>W</variation>
    <location>
        <position position="1155"/>
    </location>
</feature>
<feature type="sequence variant" id="VAR_017605" description="In DSH; dbSNP:rs28936681." evidence="11">
    <original>F</original>
    <variation>S</variation>
    <location>
        <position position="1165"/>
    </location>
</feature>
<feature type="mutagenesis site" description="Abolishes sumoylation." evidence="18">
    <original>K</original>
    <variation>R</variation>
    <location>
        <position position="418"/>
    </location>
</feature>
<feature type="mutagenesis site" description="Abolishes nuclear location." evidence="34">
    <location>
        <begin position="708"/>
        <end position="801"/>
    </location>
</feature>
<feature type="mutagenesis site" description="Decreased nuclear and partially cytoplasmic location." evidence="34">
    <original>MMP</original>
    <variation>AMA</variation>
    <location>
        <begin position="708"/>
        <end position="710"/>
    </location>
</feature>
<feature type="mutagenesis site" description="No effect on nuclear location. No effect on RNA binding." evidence="34">
    <original>KVRK</original>
    <variation>AVAA</variation>
    <location>
        <begin position="712"/>
        <end position="715"/>
    </location>
</feature>
<feature type="mutagenesis site" description="Disrupts the bi-partite nuclear localization signal and abolishes nuclear location." evidence="34">
    <location>
        <begin position="716"/>
        <end position="724"/>
    </location>
</feature>
<feature type="mutagenesis site" description="Disrupts the bi-partite nuclear localization signal and abolishes nuclear location; when associated with S-719 and N-723." evidence="34">
    <original>I</original>
    <variation>N</variation>
    <location>
        <position position="716"/>
    </location>
</feature>
<feature type="mutagenesis site" description="No effect on nuclear location; when associated with A-721 and A-724." evidence="34">
    <original>E</original>
    <variation>A</variation>
    <location>
        <position position="718"/>
    </location>
</feature>
<feature type="mutagenesis site" description="Disrupts the bi-partite nuclear localization signal and abolishes nuclear location; when associated with N-716 and N-723." evidence="34">
    <original>L</original>
    <variation>S</variation>
    <location>
        <position position="719"/>
    </location>
</feature>
<feature type="mutagenesis site" description="No effect on nuclear location; when associated with A-721 and A-724." evidence="34">
    <original>R</original>
    <variation>A</variation>
    <location>
        <position position="721"/>
    </location>
</feature>
<feature type="mutagenesis site" description="Disrupts the bi-partite nuclear localization signal and abolishes nuclear location; when associated with N-716 and S-719." evidence="34">
    <original>L</original>
    <variation>N</variation>
    <location>
        <position position="723"/>
    </location>
</feature>
<feature type="mutagenesis site" description="No effect on nuclear location; when associated with A-718 and A-721." evidence="34">
    <original>N</original>
    <variation>A</variation>
    <location>
        <position position="724"/>
    </location>
</feature>
<feature type="mutagenesis site" description="Disrupts nuclear localization signal. No effect on RNA binding." evidence="34">
    <location>
        <begin position="725"/>
        <end position="801"/>
    </location>
</feature>
<feature type="mutagenesis site" description="Strongly impaired RNA binding. No effect on nuclear location." evidence="34">
    <original>KK</original>
    <variation>AA</variation>
    <location>
        <begin position="777"/>
        <end position="778"/>
    </location>
</feature>
<feature type="mutagenesis site" description="Abolishes interaction with TNPO1, TNPO1-mediated nuclear import and nuclear location." evidence="34">
    <original>R</original>
    <variation>A</variation>
    <location>
        <position position="801"/>
    </location>
</feature>
<feature type="sequence conflict" description="In Ref. 4; CAA55968." evidence="42" ref="4">
    <original>E</original>
    <variation>G</variation>
    <location>
        <position position="53"/>
    </location>
</feature>
<feature type="sequence conflict" description="In Ref. 5; CAE45853." evidence="42" ref="5">
    <original>F</original>
    <variation>L</variation>
    <location>
        <position position="245"/>
    </location>
</feature>
<feature type="sequence conflict" description="In Ref. 5; CAE45853." evidence="42" ref="5">
    <original>F</original>
    <variation>L</variation>
    <location>
        <position position="482"/>
    </location>
</feature>
<feature type="sequence conflict" description="In Ref. 5; CAE45853." evidence="42" ref="5">
    <original>I</original>
    <variation>V</variation>
    <location>
        <position position="873"/>
    </location>
</feature>
<feature type="sequence conflict" description="In Ref. 5; CAE45853." evidence="42" ref="5">
    <original>D</original>
    <variation>G</variation>
    <location>
        <position position="1093"/>
    </location>
</feature>
<feature type="sequence conflict" description="In Ref. 4; CAA55967/CAA55968/CAA67169/CAA67170." evidence="42" ref="4">
    <original>E</original>
    <variation>K</variation>
    <location>
        <position position="1184"/>
    </location>
</feature>
<feature type="helix" evidence="57">
    <location>
        <begin position="127"/>
        <end position="130"/>
    </location>
</feature>
<feature type="helix" evidence="56">
    <location>
        <begin position="135"/>
        <end position="150"/>
    </location>
</feature>
<feature type="strand" evidence="57">
    <location>
        <begin position="152"/>
        <end position="154"/>
    </location>
</feature>
<feature type="helix" evidence="56">
    <location>
        <begin position="158"/>
        <end position="165"/>
    </location>
</feature>
<feature type="helix" evidence="56">
    <location>
        <begin position="169"/>
        <end position="181"/>
    </location>
</feature>
<feature type="strand" evidence="56">
    <location>
        <begin position="184"/>
        <end position="192"/>
    </location>
</feature>
<feature type="strand" evidence="56">
    <location>
        <begin position="194"/>
        <end position="197"/>
    </location>
</feature>
<feature type="helix" evidence="58">
    <location>
        <begin position="294"/>
        <end position="309"/>
    </location>
</feature>
<feature type="helix" evidence="58">
    <location>
        <begin position="315"/>
        <end position="322"/>
    </location>
</feature>
<feature type="helix" evidence="58">
    <location>
        <begin position="324"/>
        <end position="326"/>
    </location>
</feature>
<feature type="helix" evidence="58">
    <location>
        <begin position="327"/>
        <end position="339"/>
    </location>
</feature>
<feature type="strand" evidence="58">
    <location>
        <begin position="342"/>
        <end position="346"/>
    </location>
</feature>
<feature type="strand" evidence="58">
    <location>
        <begin position="348"/>
        <end position="350"/>
    </location>
</feature>
<feature type="strand" evidence="58">
    <location>
        <begin position="352"/>
        <end position="355"/>
    </location>
</feature>
<feature type="helix" evidence="58">
    <location>
        <begin position="357"/>
        <end position="360"/>
    </location>
</feature>
<feature type="turn" evidence="58">
    <location>
        <begin position="361"/>
        <end position="363"/>
    </location>
</feature>
<feature type="helix" evidence="59">
    <location>
        <begin position="716"/>
        <end position="721"/>
    </location>
</feature>
<feature type="turn" evidence="59">
    <location>
        <begin position="722"/>
        <end position="725"/>
    </location>
</feature>
<feature type="helix" evidence="59">
    <location>
        <begin position="727"/>
        <end position="737"/>
    </location>
</feature>
<feature type="strand" evidence="59">
    <location>
        <begin position="742"/>
        <end position="751"/>
    </location>
</feature>
<feature type="strand" evidence="59">
    <location>
        <begin position="757"/>
        <end position="764"/>
    </location>
</feature>
<feature type="strand" evidence="59">
    <location>
        <begin position="772"/>
        <end position="776"/>
    </location>
</feature>
<feature type="helix" evidence="59">
    <location>
        <begin position="777"/>
        <end position="795"/>
    </location>
</feature>
<feature type="sequence conflict" description="In Ref. 5; CAE45853." evidence="42" ref="5">
    <original>R</original>
    <variation>G</variation>
    <location sequence="P55265-4">
        <position position="13"/>
    </location>
</feature>
<reference key="1">
    <citation type="journal article" date="1994" name="Proc. Natl. Acad. Sci. U.S.A.">
        <title>Molecular cloning of cDNA for double-stranded RNA adenosine deaminase, a candidate enzyme for nuclear RNA editing.</title>
        <authorList>
            <person name="Kim U."/>
            <person name="Wang Y."/>
            <person name="Sanford T."/>
            <person name="Zeng Y."/>
            <person name="Nishikura K."/>
        </authorList>
    </citation>
    <scope>NUCLEOTIDE SEQUENCE [MRNA] (ISOFORM 1)</scope>
    <scope>PARTIAL PROTEIN SEQUENCE</scope>
    <scope>FUNCTION</scope>
    <scope>CATALYTIC ACTIVITY</scope>
    <scope>TISSUE SPECIFICITY</scope>
    <scope>VARIANT GLY-100</scope>
</reference>
<reference key="2">
    <citation type="journal article" date="1995" name="Mol. Cell. Biol.">
        <title>Expression and regulation by interferon of a double-stranded-RNA-specific adenosine deaminase from human cells: evidence for two forms of the deaminase.</title>
        <authorList>
            <person name="Patterson J.B."/>
            <person name="Samuel C.E."/>
        </authorList>
    </citation>
    <scope>NUCLEOTIDE SEQUENCE [MRNA] (ISOFORM 1)</scope>
    <scope>FUNCTION</scope>
    <scope>CATALYTIC ACTIVITY</scope>
    <scope>SUBCELLULAR LOCATION</scope>
    <scope>INDUCTION BY INTERFERON</scope>
    <scope>VARIANTS GLY-100 AND ARG-384</scope>
    <source>
        <tissue>Kidney</tissue>
    </source>
</reference>
<reference key="3">
    <citation type="journal article" date="1997" name="J. Biol. Chem.">
        <title>Functionally distinct double-stranded RNA-binding domains associated with alternative splice site variants of the interferon-inducible double-stranded RNA-specific adenosine deaminase.</title>
        <authorList>
            <person name="Liu Y."/>
            <person name="George C.X."/>
            <person name="Patterson J.B."/>
            <person name="Samuel C.E."/>
        </authorList>
    </citation>
    <scope>NUCLEOTIDE SEQUENCE [GENOMIC DNA] (ISOFORMS 1; 2 AND 3)</scope>
    <scope>VARIANTS GLY-100 AND ARG-384</scope>
    <source>
        <tissue>Placenta</tissue>
    </source>
</reference>
<reference key="4">
    <citation type="submission" date="1996-06" db="EMBL/GenBank/DDBJ databases">
        <title>The gene coding for the interferon-inducible human dsRNA adenosine deaminase is transcribed into several messengers specifying different proteins.</title>
        <authorList>
            <person name="Deblandre G."/>
            <person name="Marinx O."/>
            <person name="Nols C."/>
            <person name="Defrance P."/>
            <person name="Berr P."/>
            <person name="Huez G."/>
            <person name="Caput D."/>
        </authorList>
    </citation>
    <scope>NUCLEOTIDE SEQUENCE [MRNA] (ISOFORMS 1 AND 5)</scope>
    <scope>VARIANTS GLY-100 AND ARG-384</scope>
    <source>
        <tissue>Cervix carcinoma</tissue>
    </source>
</reference>
<reference key="5">
    <citation type="journal article" date="2007" name="BMC Genomics">
        <title>The full-ORF clone resource of the German cDNA consortium.</title>
        <authorList>
            <person name="Bechtel S."/>
            <person name="Rosenfelder H."/>
            <person name="Duda A."/>
            <person name="Schmidt C.P."/>
            <person name="Ernst U."/>
            <person name="Wellenreuther R."/>
            <person name="Mehrle A."/>
            <person name="Schuster C."/>
            <person name="Bahr A."/>
            <person name="Bloecker H."/>
            <person name="Heubner D."/>
            <person name="Hoerlein A."/>
            <person name="Michel G."/>
            <person name="Wedler H."/>
            <person name="Koehrer K."/>
            <person name="Ottenwaelder B."/>
            <person name="Poustka A."/>
            <person name="Wiemann S."/>
            <person name="Schupp I."/>
        </authorList>
    </citation>
    <scope>NUCLEOTIDE SEQUENCE [LARGE SCALE MRNA] (ISOFORM 4)</scope>
    <scope>VARIANTS GLY-100 AND ARG-384</scope>
    <source>
        <tissue>Amygdala</tissue>
        <tissue>Fetal kidney</tissue>
    </source>
</reference>
<reference key="6">
    <citation type="journal article" date="2006" name="Nature">
        <title>The DNA sequence and biological annotation of human chromosome 1.</title>
        <authorList>
            <person name="Gregory S.G."/>
            <person name="Barlow K.F."/>
            <person name="McLay K.E."/>
            <person name="Kaul R."/>
            <person name="Swarbreck D."/>
            <person name="Dunham A."/>
            <person name="Scott C.E."/>
            <person name="Howe K.L."/>
            <person name="Woodfine K."/>
            <person name="Spencer C.C.A."/>
            <person name="Jones M.C."/>
            <person name="Gillson C."/>
            <person name="Searle S."/>
            <person name="Zhou Y."/>
            <person name="Kokocinski F."/>
            <person name="McDonald L."/>
            <person name="Evans R."/>
            <person name="Phillips K."/>
            <person name="Atkinson A."/>
            <person name="Cooper R."/>
            <person name="Jones C."/>
            <person name="Hall R.E."/>
            <person name="Andrews T.D."/>
            <person name="Lloyd C."/>
            <person name="Ainscough R."/>
            <person name="Almeida J.P."/>
            <person name="Ambrose K.D."/>
            <person name="Anderson F."/>
            <person name="Andrew R.W."/>
            <person name="Ashwell R.I.S."/>
            <person name="Aubin K."/>
            <person name="Babbage A.K."/>
            <person name="Bagguley C.L."/>
            <person name="Bailey J."/>
            <person name="Beasley H."/>
            <person name="Bethel G."/>
            <person name="Bird C.P."/>
            <person name="Bray-Allen S."/>
            <person name="Brown J.Y."/>
            <person name="Brown A.J."/>
            <person name="Buckley D."/>
            <person name="Burton J."/>
            <person name="Bye J."/>
            <person name="Carder C."/>
            <person name="Chapman J.C."/>
            <person name="Clark S.Y."/>
            <person name="Clarke G."/>
            <person name="Clee C."/>
            <person name="Cobley V."/>
            <person name="Collier R.E."/>
            <person name="Corby N."/>
            <person name="Coville G.J."/>
            <person name="Davies J."/>
            <person name="Deadman R."/>
            <person name="Dunn M."/>
            <person name="Earthrowl M."/>
            <person name="Ellington A.G."/>
            <person name="Errington H."/>
            <person name="Frankish A."/>
            <person name="Frankland J."/>
            <person name="French L."/>
            <person name="Garner P."/>
            <person name="Garnett J."/>
            <person name="Gay L."/>
            <person name="Ghori M.R.J."/>
            <person name="Gibson R."/>
            <person name="Gilby L.M."/>
            <person name="Gillett W."/>
            <person name="Glithero R.J."/>
            <person name="Grafham D.V."/>
            <person name="Griffiths C."/>
            <person name="Griffiths-Jones S."/>
            <person name="Grocock R."/>
            <person name="Hammond S."/>
            <person name="Harrison E.S.I."/>
            <person name="Hart E."/>
            <person name="Haugen E."/>
            <person name="Heath P.D."/>
            <person name="Holmes S."/>
            <person name="Holt K."/>
            <person name="Howden P.J."/>
            <person name="Hunt A.R."/>
            <person name="Hunt S.E."/>
            <person name="Hunter G."/>
            <person name="Isherwood J."/>
            <person name="James R."/>
            <person name="Johnson C."/>
            <person name="Johnson D."/>
            <person name="Joy A."/>
            <person name="Kay M."/>
            <person name="Kershaw J.K."/>
            <person name="Kibukawa M."/>
            <person name="Kimberley A.M."/>
            <person name="King A."/>
            <person name="Knights A.J."/>
            <person name="Lad H."/>
            <person name="Laird G."/>
            <person name="Lawlor S."/>
            <person name="Leongamornlert D.A."/>
            <person name="Lloyd D.M."/>
            <person name="Loveland J."/>
            <person name="Lovell J."/>
            <person name="Lush M.J."/>
            <person name="Lyne R."/>
            <person name="Martin S."/>
            <person name="Mashreghi-Mohammadi M."/>
            <person name="Matthews L."/>
            <person name="Matthews N.S.W."/>
            <person name="McLaren S."/>
            <person name="Milne S."/>
            <person name="Mistry S."/>
            <person name="Moore M.J.F."/>
            <person name="Nickerson T."/>
            <person name="O'Dell C.N."/>
            <person name="Oliver K."/>
            <person name="Palmeiri A."/>
            <person name="Palmer S.A."/>
            <person name="Parker A."/>
            <person name="Patel D."/>
            <person name="Pearce A.V."/>
            <person name="Peck A.I."/>
            <person name="Pelan S."/>
            <person name="Phelps K."/>
            <person name="Phillimore B.J."/>
            <person name="Plumb R."/>
            <person name="Rajan J."/>
            <person name="Raymond C."/>
            <person name="Rouse G."/>
            <person name="Saenphimmachak C."/>
            <person name="Sehra H.K."/>
            <person name="Sheridan E."/>
            <person name="Shownkeen R."/>
            <person name="Sims S."/>
            <person name="Skuce C.D."/>
            <person name="Smith M."/>
            <person name="Steward C."/>
            <person name="Subramanian S."/>
            <person name="Sycamore N."/>
            <person name="Tracey A."/>
            <person name="Tromans A."/>
            <person name="Van Helmond Z."/>
            <person name="Wall M."/>
            <person name="Wallis J.M."/>
            <person name="White S."/>
            <person name="Whitehead S.L."/>
            <person name="Wilkinson J.E."/>
            <person name="Willey D.L."/>
            <person name="Williams H."/>
            <person name="Wilming L."/>
            <person name="Wray P.W."/>
            <person name="Wu Z."/>
            <person name="Coulson A."/>
            <person name="Vaudin M."/>
            <person name="Sulston J.E."/>
            <person name="Durbin R.M."/>
            <person name="Hubbard T."/>
            <person name="Wooster R."/>
            <person name="Dunham I."/>
            <person name="Carter N.P."/>
            <person name="McVean G."/>
            <person name="Ross M.T."/>
            <person name="Harrow J."/>
            <person name="Olson M.V."/>
            <person name="Beck S."/>
            <person name="Rogers J."/>
            <person name="Bentley D.R."/>
        </authorList>
    </citation>
    <scope>NUCLEOTIDE SEQUENCE [LARGE SCALE GENOMIC DNA]</scope>
</reference>
<reference key="7">
    <citation type="submission" date="2005-09" db="EMBL/GenBank/DDBJ databases">
        <authorList>
            <person name="Mural R.J."/>
            <person name="Istrail S."/>
            <person name="Sutton G.G."/>
            <person name="Florea L."/>
            <person name="Halpern A.L."/>
            <person name="Mobarry C.M."/>
            <person name="Lippert R."/>
            <person name="Walenz B."/>
            <person name="Shatkay H."/>
            <person name="Dew I."/>
            <person name="Miller J.R."/>
            <person name="Flanigan M.J."/>
            <person name="Edwards N.J."/>
            <person name="Bolanos R."/>
            <person name="Fasulo D."/>
            <person name="Halldorsson B.V."/>
            <person name="Hannenhalli S."/>
            <person name="Turner R."/>
            <person name="Yooseph S."/>
            <person name="Lu F."/>
            <person name="Nusskern D.R."/>
            <person name="Shue B.C."/>
            <person name="Zheng X.H."/>
            <person name="Zhong F."/>
            <person name="Delcher A.L."/>
            <person name="Huson D.H."/>
            <person name="Kravitz S.A."/>
            <person name="Mouchard L."/>
            <person name="Reinert K."/>
            <person name="Remington K.A."/>
            <person name="Clark A.G."/>
            <person name="Waterman M.S."/>
            <person name="Eichler E.E."/>
            <person name="Adams M.D."/>
            <person name="Hunkapiller M.W."/>
            <person name="Myers E.W."/>
            <person name="Venter J.C."/>
        </authorList>
    </citation>
    <scope>NUCLEOTIDE SEQUENCE [LARGE SCALE GENOMIC DNA]</scope>
</reference>
<reference key="8">
    <citation type="journal article" date="2004" name="Genome Res.">
        <title>The status, quality, and expansion of the NIH full-length cDNA project: the Mammalian Gene Collection (MGC).</title>
        <authorList>
            <consortium name="The MGC Project Team"/>
        </authorList>
    </citation>
    <scope>NUCLEOTIDE SEQUENCE [LARGE SCALE MRNA] (ISOFORM 1)</scope>
    <scope>VARIANT GLY-100</scope>
    <source>
        <tissue>Lymph</tissue>
    </source>
</reference>
<reference key="9">
    <citation type="journal article" date="1999" name="Proc. Natl. Acad. Sci. U.S.A.">
        <title>Human RNA-specific adenosine deaminase ADAR1 transcripts possess alternative exon 1 structures that initiate from different promoters, one constitutively active and the other interferon inducible.</title>
        <authorList>
            <person name="George C.X."/>
            <person name="Samuel C.E."/>
        </authorList>
    </citation>
    <scope>ALTERNATIVE PROMOTER USAGE</scope>
    <scope>INDUCTION</scope>
</reference>
<reference key="10">
    <citation type="journal article" date="2003" name="J. Biol. Chem.">
        <title>Requirement of dimerization for RNA editing activity of adenosine deaminases acting on RNA.</title>
        <authorList>
            <person name="Cho D.-S.C."/>
            <person name="Yang W."/>
            <person name="Lee J.T."/>
            <person name="Shiekhattar R."/>
            <person name="Murray J.M."/>
            <person name="Nishikura K."/>
        </authorList>
    </citation>
    <scope>FUNCTION</scope>
    <scope>CATALYTIC ACTIVITY</scope>
    <scope>HOMODIMERIZATION</scope>
    <scope>SUBUNIT</scope>
</reference>
<reference key="11">
    <citation type="journal article" date="2003" name="J. Cell Sci.">
        <title>Dynamic association of RNA-editing enzymes with the nucleolus.</title>
        <authorList>
            <person name="Desterro J.M.P."/>
            <person name="Keegan L.P."/>
            <person name="Lafarga M."/>
            <person name="Berciano M.T."/>
            <person name="O'Connell M."/>
            <person name="Carmo-Fonseca M."/>
        </authorList>
    </citation>
    <scope>SUBCELLULAR LOCATION</scope>
</reference>
<reference key="12">
    <citation type="journal article" date="2005" name="J. Biol. Chem.">
        <title>ADAR1 RNA deaminase limits short interfering RNA efficacy in mammalian cells.</title>
        <authorList>
            <person name="Yang W."/>
            <person name="Wang Q."/>
            <person name="Howell K.L."/>
            <person name="Lee J.T."/>
            <person name="Cho D.-S.C."/>
            <person name="Murray J.M."/>
            <person name="Nishikura K."/>
        </authorList>
    </citation>
    <scope>FUNCTION</scope>
</reference>
<reference key="13">
    <citation type="journal article" date="2005" name="J. Virol.">
        <title>New antiviral pathway that mediates hepatitis C virus replicon interferon sensitivity through ADAR1.</title>
        <authorList>
            <person name="Taylor D.R."/>
            <person name="Puig M."/>
            <person name="Darnell M.E."/>
            <person name="Mihalik K."/>
            <person name="Feinstone S.M."/>
        </authorList>
    </citation>
    <scope>FUNCTION</scope>
</reference>
<reference key="14">
    <citation type="journal article" date="2005" name="Mol. Biol. Cell">
        <title>SUMO-1 modification alters ADAR1 editing activity.</title>
        <authorList>
            <person name="Desterro J.M.P."/>
            <person name="Keegan L.P."/>
            <person name="Jaffray E."/>
            <person name="Hay R.T."/>
            <person name="O'Connell M.A."/>
            <person name="Carmo-Fonseca M."/>
        </authorList>
    </citation>
    <scope>FUNCTION</scope>
    <scope>SUMOYLATION AT LYS-418</scope>
    <scope>MUTAGENESIS OF LYS-418</scope>
</reference>
<reference key="15">
    <citation type="journal article" date="2005" name="Mol. Cell. Biol.">
        <title>ADAR1 interacts with NF90 through double-stranded RNA and regulates NF90-mediated gene expression independently of RNA editing.</title>
        <authorList>
            <person name="Nie Y."/>
            <person name="Ding L."/>
            <person name="Kao P.N."/>
            <person name="Braun R."/>
            <person name="Yang J.-H."/>
        </authorList>
    </citation>
    <scope>INTERACTION WITH ILF2 AND ILF3</scope>
</reference>
<reference key="16">
    <citation type="journal article" date="2006" name="J. Viral Hepat.">
        <title>The large form of ADAR 1 is responsible for enhanced hepatitis delta virus RNA editing in interferon-alpha-stimulated host cells.</title>
        <authorList>
            <person name="Hartwig D."/>
            <person name="Schuette C."/>
            <person name="Warnecke J."/>
            <person name="Dorn I."/>
            <person name="Hennig H."/>
            <person name="Kirchner H."/>
            <person name="Schlenke P."/>
        </authorList>
    </citation>
    <scope>FUNCTION</scope>
</reference>
<reference key="17">
    <citation type="journal article" date="2006" name="Nat. Biotechnol.">
        <title>A probability-based approach for high-throughput protein phosphorylation analysis and site localization.</title>
        <authorList>
            <person name="Beausoleil S.A."/>
            <person name="Villen J."/>
            <person name="Gerber S.A."/>
            <person name="Rush J."/>
            <person name="Gygi S.P."/>
        </authorList>
    </citation>
    <scope>PHOSPHORYLATION [LARGE SCALE ANALYSIS] AT THR-808</scope>
    <scope>IDENTIFICATION BY MASS SPECTROMETRY [LARGE SCALE ANALYSIS]</scope>
    <source>
        <tissue>Cervix carcinoma</tissue>
    </source>
</reference>
<reference key="18">
    <citation type="journal article" date="2007" name="J. Proteome Res.">
        <title>Improved titanium dioxide enrichment of phosphopeptides from HeLa cells and high confident phosphopeptide identification by cross-validation of MS/MS and MS/MS/MS spectra.</title>
        <authorList>
            <person name="Yu L.R."/>
            <person name="Zhu Z."/>
            <person name="Chan K.C."/>
            <person name="Issaq H.J."/>
            <person name="Dimitrov D.S."/>
            <person name="Veenstra T.D."/>
        </authorList>
    </citation>
    <scope>PHOSPHORYLATION [LARGE SCALE ANALYSIS] AT THR-808</scope>
    <scope>IDENTIFICATION BY MASS SPECTROMETRY [LARGE SCALE ANALYSIS]</scope>
    <source>
        <tissue>Cervix carcinoma</tissue>
    </source>
</reference>
<reference key="19">
    <citation type="journal article" date="2007" name="J. Virol.">
        <title>Double-stranded RNA deaminase ADAR1 increases host susceptibility to virus infection.</title>
        <authorList>
            <person name="Nie Y."/>
            <person name="Hammond G.L."/>
            <person name="Yang J.H."/>
        </authorList>
    </citation>
    <scope>FUNCTION</scope>
    <scope>INTERACTION WITH EIF2AK2</scope>
</reference>
<reference key="20">
    <citation type="journal article" date="2008" name="J. Biol. Chem.">
        <title>Down-regulation of RNA editing in pediatric astrocytomas: ADAR2 editing activity inhibits cell migration and proliferation.</title>
        <authorList>
            <person name="Cenci C."/>
            <person name="Barzotti R."/>
            <person name="Galeano F."/>
            <person name="Corbelli S."/>
            <person name="Rota R."/>
            <person name="Massimi L."/>
            <person name="Di Rocco C."/>
            <person name="O'Connell M.A."/>
            <person name="Gallo A."/>
        </authorList>
    </citation>
    <scope>ALTERNATIVE SPLICING</scope>
    <scope>SUBUNIT</scope>
    <scope>TISSUE SPECIFICITY</scope>
</reference>
<reference key="21">
    <citation type="journal article" date="2008" name="J. Proteome Res.">
        <title>Combining protein-based IMAC, peptide-based IMAC, and MudPIT for efficient phosphoproteomic analysis.</title>
        <authorList>
            <person name="Cantin G.T."/>
            <person name="Yi W."/>
            <person name="Lu B."/>
            <person name="Park S.K."/>
            <person name="Xu T."/>
            <person name="Lee J.-D."/>
            <person name="Yates J.R. III"/>
        </authorList>
    </citation>
    <scope>PHOSPHORYLATION [LARGE SCALE ANALYSIS] AT THR-808</scope>
    <scope>IDENTIFICATION BY MASS SPECTROMETRY [LARGE SCALE ANALYSIS]</scope>
    <source>
        <tissue>Cervix carcinoma</tissue>
    </source>
</reference>
<reference key="22">
    <citation type="journal article" date="2008" name="Proc. Natl. Acad. Sci. U.S.A.">
        <title>A quantitative atlas of mitotic phosphorylation.</title>
        <authorList>
            <person name="Dephoure N."/>
            <person name="Zhou C."/>
            <person name="Villen J."/>
            <person name="Beausoleil S.A."/>
            <person name="Bakalarski C.E."/>
            <person name="Elledge S.J."/>
            <person name="Gygi S.P."/>
        </authorList>
    </citation>
    <scope>PHOSPHORYLATION [LARGE SCALE ANALYSIS] AT THR-601; SER-614; SER-823 AND SER-825</scope>
    <scope>IDENTIFICATION BY MASS SPECTROMETRY [LARGE SCALE ANALYSIS]</scope>
    <source>
        <tissue>Cervix carcinoma</tissue>
    </source>
</reference>
<reference key="23">
    <citation type="journal article" date="2008" name="Proc. Natl. Acad. Sci. U.S.A.">
        <title>The editing enzyme ADAR1 and the mRNA surveillance protein hUpf1 interact in the cell nucleus.</title>
        <authorList>
            <person name="Agranat L."/>
            <person name="Raitskin O."/>
            <person name="Sperling J."/>
            <person name="Sperling R."/>
        </authorList>
    </citation>
    <scope>INTERACTION WITH UPF1</scope>
    <scope>SUBCELLULAR LOCATION</scope>
</reference>
<reference key="24">
    <citation type="journal article" date="2009" name="Anal. Chem.">
        <title>Lys-N and trypsin cover complementary parts of the phosphoproteome in a refined SCX-based approach.</title>
        <authorList>
            <person name="Gauci S."/>
            <person name="Helbig A.O."/>
            <person name="Slijper M."/>
            <person name="Krijgsveld J."/>
            <person name="Heck A.J."/>
            <person name="Mohammed S."/>
        </authorList>
    </citation>
    <scope>IDENTIFICATION BY MASS SPECTROMETRY [LARGE SCALE ANALYSIS]</scope>
</reference>
<reference key="25">
    <citation type="journal article" date="2009" name="J. Biol. Chem.">
        <title>RNA-specific adenosine deaminase ADAR1 suppresses measles virus-induced apoptosis and activation of protein kinase PKR.</title>
        <authorList>
            <person name="Toth A.M."/>
            <person name="Li Z."/>
            <person name="Cattaneo R."/>
            <person name="Samuel C.E."/>
        </authorList>
    </citation>
    <scope>FUNCTION</scope>
</reference>
<reference key="26">
    <citation type="journal article" date="2009" name="J. Virol.">
        <title>ADAR1 interacts with PKR during human immunodeficiency virus infection of lymphocytes and contributes to viral replication.</title>
        <authorList>
            <person name="Clerzius G."/>
            <person name="Gelinas J.F."/>
            <person name="Daher A."/>
            <person name="Bonnet M."/>
            <person name="Meurs E.F."/>
            <person name="Gatignol A."/>
        </authorList>
    </citation>
    <scope>FUNCTION</scope>
    <scope>INTERACTION WITH EIF2AK2</scope>
</reference>
<reference key="27">
    <citation type="journal article" date="2009" name="Mol. Cell. Biol.">
        <title>RNA-regulated interaction of transportin-1 and exportin-5 with the double-stranded RNA-binding domain regulates nucleocytoplasmic shuttling of ADAR1.</title>
        <authorList>
            <person name="Fritz J."/>
            <person name="Strehblow A."/>
            <person name="Taschner A."/>
            <person name="Schopoff S."/>
            <person name="Pasierbek P."/>
            <person name="Jantsch M.F."/>
        </authorList>
    </citation>
    <scope>SUBCELLULAR LOCATION</scope>
    <scope>INTERACTION WITH TNPO1 AND XPO5</scope>
    <scope>DOMAIN</scope>
</reference>
<reference key="28">
    <citation type="journal article" date="2009" name="Nucleic Acids Res.">
        <title>Editing of HIV-1 RNA by the double-stranded RNA deaminase ADAR1 stimulates viral infection.</title>
        <authorList>
            <person name="Doria M."/>
            <person name="Neri F."/>
            <person name="Gallo A."/>
            <person name="Farace M.G."/>
            <person name="Michienzi A."/>
        </authorList>
    </citation>
    <scope>FUNCTION</scope>
</reference>
<reference key="29">
    <citation type="journal article" date="2009" name="Sci. Signal.">
        <title>Quantitative phosphoproteomic analysis of T cell receptor signaling reveals system-wide modulation of protein-protein interactions.</title>
        <authorList>
            <person name="Mayya V."/>
            <person name="Lundgren D.H."/>
            <person name="Hwang S.-I."/>
            <person name="Rezaul K."/>
            <person name="Wu L."/>
            <person name="Eng J.K."/>
            <person name="Rodionov V."/>
            <person name="Han D.K."/>
        </authorList>
    </citation>
    <scope>PHOSPHORYLATION [LARGE SCALE ANALYSIS] AT THR-601 AND THR-808</scope>
    <scope>IDENTIFICATION BY MASS SPECTROMETRY [LARGE SCALE ANALYSIS]</scope>
    <source>
        <tissue>Leukemic T-cell</tissue>
    </source>
</reference>
<reference key="30">
    <citation type="journal article" date="2010" name="Annu. Rev. Biochem.">
        <title>Functions and regulation of RNA editing by ADAR deaminases.</title>
        <authorList>
            <person name="Nishikura K."/>
        </authorList>
    </citation>
    <scope>REVIEW</scope>
</reference>
<reference key="31">
    <citation type="journal article" date="2010" name="Int. J. Cancer">
        <title>Human BLCAP transcript: new editing events in normal and cancerous tissues.</title>
        <authorList>
            <person name="Galeano F."/>
            <person name="Leroy A."/>
            <person name="Rossetti C."/>
            <person name="Gromova I."/>
            <person name="Gautier P."/>
            <person name="Keegan L.P."/>
            <person name="Massimi L."/>
            <person name="Di Rocco C."/>
            <person name="O'Connell M.A."/>
            <person name="Gallo A."/>
        </authorList>
    </citation>
    <scope>FUNCTION</scope>
</reference>
<reference key="32">
    <citation type="journal article" date="2010" name="Sci. Signal.">
        <title>Quantitative phosphoproteomics reveals widespread full phosphorylation site occupancy during mitosis.</title>
        <authorList>
            <person name="Olsen J.V."/>
            <person name="Vermeulen M."/>
            <person name="Santamaria A."/>
            <person name="Kumar C."/>
            <person name="Miller M.L."/>
            <person name="Jensen L.J."/>
            <person name="Gnad F."/>
            <person name="Cox J."/>
            <person name="Jensen T.S."/>
            <person name="Nigg E.A."/>
            <person name="Brunak S."/>
            <person name="Mann M."/>
        </authorList>
    </citation>
    <scope>PHOSPHORYLATION [LARGE SCALE ANALYSIS] AT THR-808 AND SER-825</scope>
    <scope>IDENTIFICATION BY MASS SPECTROMETRY [LARGE SCALE ANALYSIS]</scope>
    <source>
        <tissue>Cervix carcinoma</tissue>
    </source>
</reference>
<reference key="33">
    <citation type="journal article" date="2011" name="BMC Syst. Biol.">
        <title>Initial characterization of the human central proteome.</title>
        <authorList>
            <person name="Burkard T.R."/>
            <person name="Planyavsky M."/>
            <person name="Kaupe I."/>
            <person name="Breitwieser F.P."/>
            <person name="Buerckstuemmer T."/>
            <person name="Bennett K.L."/>
            <person name="Superti-Furga G."/>
            <person name="Colinge J."/>
        </authorList>
    </citation>
    <scope>IDENTIFICATION BY MASS SPECTROMETRY [LARGE SCALE ANALYSIS]</scope>
</reference>
<reference key="34">
    <citation type="journal article" date="2011" name="Biochemistry (Mosc.)">
        <title>RNA editing catalyzed by ADAR1 and its function in mammalian cells.</title>
        <authorList>
            <person name="Wang Q."/>
        </authorList>
    </citation>
    <scope>REVIEW</scope>
</reference>
<reference key="35">
    <citation type="journal article" date="2011" name="J. Gen. Virol.">
        <title>ADAR2 editing enzyme is a novel human immunodeficiency virus-1 proviral factor.</title>
        <authorList>
            <person name="Doria M."/>
            <person name="Tomaselli S."/>
            <person name="Neri F."/>
            <person name="Ciafre S.A."/>
            <person name="Farace M.G."/>
            <person name="Michienzi A."/>
            <person name="Gallo A."/>
        </authorList>
    </citation>
    <scope>FUNCTION</scope>
</reference>
<reference key="36">
    <citation type="journal article" date="2011" name="J. Interferon Cytokine Res.">
        <title>Adenosine deaminases acting on RNA, RNA editing, and interferon action.</title>
        <authorList>
            <person name="George C.X."/>
            <person name="Gan Z."/>
            <person name="Liu Y."/>
            <person name="Samuel C.E."/>
        </authorList>
    </citation>
    <scope>REVIEW</scope>
</reference>
<reference key="37">
    <citation type="journal article" date="2011" name="J. Virol.">
        <title>Enhancement of replication of RNA viruses by ADAR1 via RNA editing and inhibition of RNA-activated protein kinase.</title>
        <authorList>
            <person name="Gelinas J.F."/>
            <person name="Clerzius G."/>
            <person name="Shaw E."/>
            <person name="Gatignol A."/>
        </authorList>
    </citation>
    <scope>REVIEW</scope>
</reference>
<reference key="38">
    <citation type="journal article" date="2011" name="Sci. Signal.">
        <title>System-wide temporal characterization of the proteome and phosphoproteome of human embryonic stem cell differentiation.</title>
        <authorList>
            <person name="Rigbolt K.T."/>
            <person name="Prokhorova T.A."/>
            <person name="Akimov V."/>
            <person name="Henningsen J."/>
            <person name="Johansen P.T."/>
            <person name="Kratchmarova I."/>
            <person name="Kassem M."/>
            <person name="Mann M."/>
            <person name="Olsen J.V."/>
            <person name="Blagoev B."/>
        </authorList>
    </citation>
    <scope>PHOSPHORYLATION [LARGE SCALE ANALYSIS] AT SER-825</scope>
    <scope>IDENTIFICATION BY MASS SPECTROMETRY [LARGE SCALE ANALYSIS]</scope>
</reference>
<reference key="39">
    <citation type="journal article" date="2011" name="Virology">
        <title>Adenosine deaminases acting on RNA (ADARs) are both antiviral and proviral.</title>
        <authorList>
            <person name="Samuel C.E."/>
        </authorList>
    </citation>
    <scope>REVIEW</scope>
</reference>
<reference key="40">
    <citation type="journal article" date="2012" name="Crit. Rev. Biochem. Mol. Biol.">
        <title>A-to-I editing of protein coding and noncoding RNAs.</title>
        <authorList>
            <person name="Mallela A."/>
            <person name="Nishikura K."/>
        </authorList>
    </citation>
    <scope>REVIEW</scope>
</reference>
<reference key="41">
    <citation type="journal article" date="2012" name="Curr. Top. Microbiol. Immunol.">
        <title>ADAR proteins: structure and catalytic mechanism.</title>
        <authorList>
            <person name="Goodman R.A."/>
            <person name="Macbeth M.R."/>
            <person name="Beal P.A."/>
        </authorList>
    </citation>
    <scope>REVIEW</scope>
</reference>
<reference key="42">
    <citation type="journal article" date="2012" name="J. Virol.">
        <title>Adenosine deaminase acting on RNA 1 (ADAR1) suppresses the induction of interferon by measles virus.</title>
        <authorList>
            <person name="Li Z."/>
            <person name="Okonski K.M."/>
            <person name="Samuel C.E."/>
        </authorList>
    </citation>
    <scope>FUNCTION</scope>
</reference>
<reference key="43">
    <citation type="journal article" date="2012" name="Mol. Neurobiol.">
        <title>Activity regulation of adenosine deaminases acting on RNA (ADARs).</title>
        <authorList>
            <person name="Orlandi C."/>
            <person name="Barbon A."/>
            <person name="Barlati S."/>
        </authorList>
    </citation>
    <scope>REVIEW</scope>
</reference>
<reference key="44">
    <citation type="journal article" date="2013" name="J. Proteome Res.">
        <title>Toward a comprehensive characterization of a human cancer cell phosphoproteome.</title>
        <authorList>
            <person name="Zhou H."/>
            <person name="Di Palma S."/>
            <person name="Preisinger C."/>
            <person name="Peng M."/>
            <person name="Polat A.N."/>
            <person name="Heck A.J."/>
            <person name="Mohammed S."/>
        </authorList>
    </citation>
    <scope>PHOSPHORYLATION [LARGE SCALE ANALYSIS] AT SER-481; THR-601; THR-603; SER-629; SER-636; THR-808; SER-814 AND SER-825</scope>
    <scope>IDENTIFICATION BY MASS SPECTROMETRY [LARGE SCALE ANALYSIS]</scope>
    <source>
        <tissue>Cervix carcinoma</tissue>
        <tissue>Erythroleukemia</tissue>
    </source>
</reference>
<reference key="45">
    <citation type="journal article" date="2014" name="J. Proteomics">
        <title>An enzyme assisted RP-RPLC approach for in-depth analysis of human liver phosphoproteome.</title>
        <authorList>
            <person name="Bian Y."/>
            <person name="Song C."/>
            <person name="Cheng K."/>
            <person name="Dong M."/>
            <person name="Wang F."/>
            <person name="Huang J."/>
            <person name="Sun D."/>
            <person name="Wang L."/>
            <person name="Ye M."/>
            <person name="Zou H."/>
        </authorList>
    </citation>
    <scope>IDENTIFICATION BY MASS SPECTROMETRY [LARGE SCALE ANALYSIS]</scope>
    <source>
        <tissue>Liver</tissue>
    </source>
</reference>
<reference key="46">
    <citation type="journal article" date="2014" name="Mol. Cell. Proteomics">
        <title>Immunoaffinity enrichment and mass spectrometry analysis of protein methylation.</title>
        <authorList>
            <person name="Guo A."/>
            <person name="Gu H."/>
            <person name="Zhou J."/>
            <person name="Mulhern D."/>
            <person name="Wang Y."/>
            <person name="Lee K.A."/>
            <person name="Yang V."/>
            <person name="Aguiar M."/>
            <person name="Kornhauser J."/>
            <person name="Jia X."/>
            <person name="Ren J."/>
            <person name="Beausoleil S.A."/>
            <person name="Silva J.C."/>
            <person name="Vemulapalli V."/>
            <person name="Bedford M.T."/>
            <person name="Comb M.J."/>
        </authorList>
    </citation>
    <scope>METHYLATION [LARGE SCALE ANALYSIS] AT ARG-26</scope>
    <scope>IDENTIFICATION BY MASS SPECTROMETRY [LARGE SCALE ANALYSIS]</scope>
    <source>
        <tissue>Colon carcinoma</tissue>
    </source>
</reference>
<reference key="47">
    <citation type="journal article" date="2014" name="Proc. Natl. Acad. Sci. U.S.A.">
        <title>Mapping of SUMO sites and analysis of SUMOylation changes induced by external stimuli.</title>
        <authorList>
            <person name="Impens F."/>
            <person name="Radoshevich L."/>
            <person name="Cossart P."/>
            <person name="Ribet D."/>
        </authorList>
    </citation>
    <scope>SUMOYLATION [LARGE SCALE ANALYSIS] AT LYS-418</scope>
    <scope>IDENTIFICATION BY MASS SPECTROMETRY [LARGE SCALE ANALYSIS]</scope>
</reference>
<reference key="48">
    <citation type="journal article" date="2015" name="Mol. Cell. Proteomics">
        <title>System-wide analysis of SUMOylation dynamics in response to replication stress reveals novel small ubiquitin-like modified target proteins and acceptor lysines relevant for genome stability.</title>
        <authorList>
            <person name="Xiao Z."/>
            <person name="Chang J.G."/>
            <person name="Hendriks I.A."/>
            <person name="Sigurdsson J.O."/>
            <person name="Olsen J.V."/>
            <person name="Vertegaal A.C."/>
        </authorList>
    </citation>
    <scope>SUMOYLATION [LARGE SCALE ANALYSIS] AT LYS-418</scope>
    <scope>IDENTIFICATION BY MASS SPECTROMETRY [LARGE SCALE ANALYSIS]</scope>
</reference>
<reference key="49">
    <citation type="journal article" date="2017" name="Nat. Struct. Mol. Biol.">
        <title>Site-specific mapping of the human SUMO proteome reveals co-modification with phosphorylation.</title>
        <authorList>
            <person name="Hendriks I.A."/>
            <person name="Lyon D."/>
            <person name="Young C."/>
            <person name="Jensen L.J."/>
            <person name="Vertegaal A.C."/>
            <person name="Nielsen M.L."/>
        </authorList>
    </citation>
    <scope>SUMOYLATION [LARGE SCALE ANALYSIS] AT LYS-384; LYS-408; LYS-418; LYS-580 AND LYS-875</scope>
    <scope>IDENTIFICATION BY MASS SPECTROMETRY [LARGE SCALE ANALYSIS]</scope>
</reference>
<reference key="50">
    <citation type="journal article" date="1999" name="Science">
        <title>Crystal structure of the Z alpha domain of the human editing enzyme ADAR1 bound to left-handed Z-DNA.</title>
        <authorList>
            <person name="Schwartz T."/>
            <person name="Rould M.A."/>
            <person name="Lowenhaupt K."/>
            <person name="Herbert A."/>
            <person name="Rich A."/>
        </authorList>
    </citation>
    <scope>X-RAY CRYSTALLOGRAPHY (2.1 ANGSTROMS) OF 133-209 IN COMPLEX WITH Z-DNA</scope>
    <scope>DOMAIN</scope>
</reference>
<reference key="51">
    <citation type="journal article" date="1999" name="Proc. Natl. Acad. Sci. U.S.A.">
        <title>The solution structure of the Zalpha domain of the human RNA editing enzyme ADAR1 reveals a prepositioned binding surface for Z-DNA.</title>
        <authorList>
            <person name="Schade M."/>
            <person name="Turner C.J."/>
            <person name="Kuehne R."/>
            <person name="Schmieder P."/>
            <person name="Lowenhaupt K."/>
            <person name="Herbert A."/>
            <person name="Rich A."/>
            <person name="Oschkinat H."/>
        </authorList>
    </citation>
    <scope>STRUCTURE BY NMR OF 125-201 IN COMPLEX WITH Z-DNA AND ALONE</scope>
    <scope>DOMAIN</scope>
</reference>
<reference evidence="43" key="52">
    <citation type="journal article" date="2005" name="Nature">
        <title>Crystal structure of a junction between B-DNA and Z-DNA reveals two extruded bases.</title>
        <authorList>
            <person name="Ha S.C."/>
            <person name="Lowenhaupt K."/>
            <person name="Rich A."/>
            <person name="Kim Y.G."/>
            <person name="Kim K.K."/>
        </authorList>
    </citation>
    <scope>X-RAY CRYSTALLOGRAPHY (2.60 ANGSTROMS) OF 140-202 IN COMPLEX WITH DNA</scope>
    <scope>DOMAIN</scope>
</reference>
<reference key="53">
    <citation type="journal article" date="2014" name="Proc. Natl. Acad. Sci. U.S.A.">
        <title>A bimodular nuclear localization signal assembled via an extended double-stranded RNA-binding domain acts as an RNA-sensing signal for transportin 1.</title>
        <authorList>
            <person name="Barraud P."/>
            <person name="Banerjee S."/>
            <person name="Mohamed W.I."/>
            <person name="Jantsch M.F."/>
            <person name="Allain F.H."/>
        </authorList>
    </citation>
    <scope>STRUCTURE BY NMR OF 708-801</scope>
    <scope>DOMAIN</scope>
    <scope>SUBCELLULAR LOCATION</scope>
    <scope>INTERACTION WITH TNPO1</scope>
    <scope>MUTAGENESIS OF 708-MET--PRO-710; 708-MET--ARG-801; 712-LYS--LYS-715; 716-ILE--ASN-724; ILE-716; GLU-718; LEU-719; ARG-721; LEU-723; ASN-724; 725-THR--ARG-801; 777-LYS-LYS-778 AND ARG-801</scope>
</reference>
<reference key="54">
    <citation type="journal article" date="2003" name="Am. J. Hum. Genet.">
        <title>Mutations of the RNA-specific adenosine deaminase gene (DSRAD) are involved in dyschromatosis symmetrica hereditaria.</title>
        <authorList>
            <person name="Miyamura Y."/>
            <person name="Suzuki T."/>
            <person name="Kono M."/>
            <person name="Inagaki K."/>
            <person name="Ito S."/>
            <person name="Suzuki N."/>
            <person name="Tomita Y."/>
        </authorList>
    </citation>
    <scope>VARIANTS DSH PRO-923 AND SER-1165</scope>
</reference>
<reference key="55">
    <citation type="journal article" date="2004" name="Hum. Mutat.">
        <title>Seven novel mutations of the ADAR gene in Chinese families and sporadic patients with dyschromatosis symmetrica hereditaria (DSH).</title>
        <authorList>
            <person name="Zhang X.-J."/>
            <person name="He P.-P."/>
            <person name="Li M."/>
            <person name="He C.-D."/>
            <person name="Yan K.-L."/>
            <person name="Cui Y."/>
            <person name="Yang S."/>
            <person name="Zhang K.-Y."/>
            <person name="Gao M."/>
            <person name="Chen J.-J."/>
            <person name="Li C.-R."/>
            <person name="Jin L."/>
            <person name="Chen H.-D."/>
            <person name="Xu S.-J."/>
            <person name="Huang W."/>
        </authorList>
    </citation>
    <scope>VARIANT DSH PHE-966</scope>
</reference>
<reference key="56">
    <citation type="journal article" date="2005" name="J. Dermatol. Sci.">
        <title>A new arginine substitution mutation of DSRAD gene in a Chinese family with dyschromatosis symmetrica hereditaria.</title>
        <authorList>
            <person name="Li C.-R."/>
            <person name="Li M."/>
            <person name="Ma H.-J."/>
            <person name="Luo D."/>
            <person name="Yang L.-J."/>
            <person name="Wang D.-G."/>
            <person name="Zhu X.-H."/>
            <person name="Yue X.-Z."/>
            <person name="Chen W.-Q."/>
            <person name="Zhu W.-Y."/>
        </authorList>
    </citation>
    <scope>VARIANT DSH TRP-1155</scope>
</reference>
<reference key="57">
    <citation type="journal article" date="2006" name="Science">
        <title>The consensus coding sequences of human breast and colorectal cancers.</title>
        <authorList>
            <person name="Sjoeblom T."/>
            <person name="Jones S."/>
            <person name="Wood L.D."/>
            <person name="Parsons D.W."/>
            <person name="Lin J."/>
            <person name="Barber T.D."/>
            <person name="Mandelker D."/>
            <person name="Leary R.J."/>
            <person name="Ptak J."/>
            <person name="Silliman N."/>
            <person name="Szabo S."/>
            <person name="Buckhaults P."/>
            <person name="Farrell C."/>
            <person name="Meeh P."/>
            <person name="Markowitz S.D."/>
            <person name="Willis J."/>
            <person name="Dawson D."/>
            <person name="Willson J.K.V."/>
            <person name="Gazdar A.F."/>
            <person name="Hartigan J."/>
            <person name="Wu L."/>
            <person name="Liu C."/>
            <person name="Parmigiani G."/>
            <person name="Park B.H."/>
            <person name="Bachman K.E."/>
            <person name="Papadopoulos N."/>
            <person name="Vogelstein B."/>
            <person name="Kinzler K.W."/>
            <person name="Velculescu V.E."/>
        </authorList>
    </citation>
    <scope>VARIANT [LARGE SCALE ANALYSIS] VAL-806</scope>
</reference>
<reference key="58">
    <citation type="journal article" date="2012" name="Nat. Genet.">
        <title>Mutations in ADAR1 cause Aicardi-Goutieres syndrome associated with a type I interferon signature.</title>
        <authorList>
            <person name="Rice G.I."/>
            <person name="Kasher P.R."/>
            <person name="Forte G.M."/>
            <person name="Mannion N.M."/>
            <person name="Greenwood S.M."/>
            <person name="Szynkiewicz M."/>
            <person name="Dickerson J.E."/>
            <person name="Bhaskar S.S."/>
            <person name="Zampini M."/>
            <person name="Briggs T.A."/>
            <person name="Jenkinson E.M."/>
            <person name="Bacino C.A."/>
            <person name="Battini R."/>
            <person name="Bertini E."/>
            <person name="Brogan P.A."/>
            <person name="Brueton L.A."/>
            <person name="Carpanelli M."/>
            <person name="De Laet C."/>
            <person name="de Lonlay P."/>
            <person name="del Toro M."/>
            <person name="Desguerre I."/>
            <person name="Fazzi E."/>
            <person name="Garcia-Cazorla A."/>
            <person name="Heiberg A."/>
            <person name="Kawaguchi M."/>
            <person name="Kumar R."/>
            <person name="Lin J.P."/>
            <person name="Lourenco C.M."/>
            <person name="Male A.M."/>
            <person name="Marques W. Jr."/>
            <person name="Mignot C."/>
            <person name="Olivieri I."/>
            <person name="Orcesi S."/>
            <person name="Prabhakar P."/>
            <person name="Rasmussen M."/>
            <person name="Robinson R.A."/>
            <person name="Rozenberg F."/>
            <person name="Schmidt J.L."/>
            <person name="Steindl K."/>
            <person name="Tan T.Y."/>
            <person name="van der Merwe W.G."/>
            <person name="Vanderver A."/>
            <person name="Vassallo G."/>
            <person name="Wakeling E.L."/>
            <person name="Wassmer E."/>
            <person name="Whittaker E."/>
            <person name="Livingston J.H."/>
            <person name="Lebon P."/>
            <person name="Suzuki T."/>
            <person name="McLaughlin P.J."/>
            <person name="Keegan L.P."/>
            <person name="O'Connell M.A."/>
            <person name="Lovell S.C."/>
            <person name="Crow Y.J."/>
        </authorList>
    </citation>
    <scope>VARIANTS AGS6 ALA-193; THR-870; THR-872; HIS-892; ASN-999; ARG-1007; PHE-1112 AND HIS-1113</scope>
</reference>